<organism>
    <name type="scientific">Homo sapiens</name>
    <name type="common">Human</name>
    <dbReference type="NCBI Taxonomy" id="9606"/>
    <lineage>
        <taxon>Eukaryota</taxon>
        <taxon>Metazoa</taxon>
        <taxon>Chordata</taxon>
        <taxon>Craniata</taxon>
        <taxon>Vertebrata</taxon>
        <taxon>Euteleostomi</taxon>
        <taxon>Mammalia</taxon>
        <taxon>Eutheria</taxon>
        <taxon>Euarchontoglires</taxon>
        <taxon>Primates</taxon>
        <taxon>Haplorrhini</taxon>
        <taxon>Catarrhini</taxon>
        <taxon>Hominidae</taxon>
        <taxon>Homo</taxon>
    </lineage>
</organism>
<comment type="function">
    <text evidence="5 7 8 19">Induces apoptosis and anoikis. Isoform BimL is more potent than isoform BimEL. Isoform Bim-alpha1, isoform Bim-alpha2 and isoform Bim-alpha3 induce apoptosis, although less potent than isoform BimEL, isoform BimL and isoform BimS. Isoform Bim-gamma induces apoptosis. Isoform Bim-alpha3 induces apoptosis possibly through a caspase-mediated pathway. Isoform BimAC and isoform BimABC lack the ability to induce apoptosis.</text>
</comment>
<comment type="subunit">
    <text evidence="5 9 11 12 13 14 16 17 18">Forms heterodimers with a number of antiapoptotic Bcl-2 proteins, including MCL1, BCL2, BCL2L1 isoform Bcl-X(L), BCL2A1/BFL-1, BHRF1, and BCL2L2/BCLW (PubMed:11997495, PubMed:18812174, PubMed:27013495). Does not heterodimerize with proapoptotic proteins such as BAD, BOK or BAK. Identified in a complex containing BCL2L11, DYNLL1 and BCL2L1 isoform Bcl-X(L); BH3 integrity is required for BCL2L1-binding. Interacts with YWHAZ. When phosphorylated, interacts with TRIM2; this interaction is associated with ubiquitination and degradation (PubMed:21478148). Interacts with MCL1; may sequester BCL2L11 to prevent its pro-apoptotic activity (PubMed:17389404, PubMed:27013495). Interacts with GIMAP5 (PubMed:16509771). Interacts with BCL2L10/BCL-B (PubMed:22498477, PubMed:23235460, PubMed:23563182).</text>
</comment>
<comment type="subunit">
    <molecule>Isoform BimEL</molecule>
    <text evidence="8">Interacts (when phosphorylated) with USP27X; the interaction leads to BCL2L11 deubiquitination and stabilization (PubMed:27013495). Interacts with humanin; the interaction prevents BIM-induced apoptosis.</text>
</comment>
<comment type="subunit">
    <molecule>Isoform BimL</molecule>
    <text evidence="8">Does not interact with humanin.</text>
</comment>
<comment type="subunit">
    <molecule>Isoform BimS</molecule>
    <text evidence="5 8">Interacts with BAX; the interaction may lead to BAX activation through conformational change (PubMed:11997495). Does not interact with humanin (PubMed:15661735).</text>
</comment>
<comment type="subunit">
    <molecule>Isoform Bim-alpha3</molecule>
    <text evidence="5">Interacts with BAX; the interaction may lead to BAX activation through conformational change.</text>
</comment>
<comment type="interaction">
    <interactant intactId="EBI-526406">
        <id>O43521</id>
    </interactant>
    <interactant intactId="EBI-700771">
        <id>Q92934</id>
        <label>BAD</label>
    </interactant>
    <organismsDiffer>false</organismsDiffer>
    <experiments>2</experiments>
</comment>
<comment type="interaction">
    <interactant intactId="EBI-526406">
        <id>O43521</id>
    </interactant>
    <interactant intactId="EBI-516580">
        <id>Q07812</id>
        <label>BAX</label>
    </interactant>
    <organismsDiffer>false</organismsDiffer>
    <experiments>22</experiments>
</comment>
<comment type="interaction">
    <interactant intactId="EBI-526406">
        <id>O43521</id>
    </interactant>
    <interactant intactId="EBI-77694">
        <id>P10415</id>
        <label>BCL2</label>
    </interactant>
    <organismsDiffer>false</organismsDiffer>
    <experiments>11</experiments>
</comment>
<comment type="interaction">
    <interactant intactId="EBI-526406">
        <id>O43521</id>
    </interactant>
    <interactant intactId="EBI-1003550">
        <id>Q16548</id>
        <label>BCL2A1</label>
    </interactant>
    <organismsDiffer>false</organismsDiffer>
    <experiments>4</experiments>
</comment>
<comment type="interaction">
    <interactant intactId="EBI-526406">
        <id>O43521</id>
    </interactant>
    <interactant intactId="EBI-78035">
        <id>Q07817</id>
        <label>BCL2L1</label>
    </interactant>
    <organismsDiffer>false</organismsDiffer>
    <experiments>11</experiments>
</comment>
<comment type="interaction">
    <interactant intactId="EBI-526406">
        <id>O43521</id>
    </interactant>
    <interactant intactId="EBI-287195">
        <id>Q07817-1</id>
        <label>BCL2L1</label>
    </interactant>
    <organismsDiffer>false</organismsDiffer>
    <experiments>10</experiments>
</comment>
<comment type="interaction">
    <interactant intactId="EBI-526406">
        <id>O43521</id>
    </interactant>
    <interactant intactId="EBI-2126349">
        <id>Q9HD36</id>
        <label>BCL2L10</label>
    </interactant>
    <organismsDiffer>false</organismsDiffer>
    <experiments>11</experiments>
</comment>
<comment type="interaction">
    <interactant intactId="EBI-526406">
        <id>O43521</id>
    </interactant>
    <interactant intactId="EBI-707714">
        <id>Q92843</id>
        <label>BCL2L2</label>
    </interactant>
    <organismsDiffer>false</organismsDiffer>
    <experiments>10</experiments>
</comment>
<comment type="interaction">
    <interactant intactId="EBI-526406">
        <id>O43521</id>
    </interactant>
    <interactant intactId="EBI-740376">
        <id>Q86UW9</id>
        <label>DTX2</label>
    </interactant>
    <organismsDiffer>false</organismsDiffer>
    <experiments>3</experiments>
</comment>
<comment type="interaction">
    <interactant intactId="EBI-526406">
        <id>O43521</id>
    </interactant>
    <interactant intactId="EBI-10178634">
        <id>P43364-2</id>
        <label>MAGEA11</label>
    </interactant>
    <organismsDiffer>false</organismsDiffer>
    <experiments>3</experiments>
</comment>
<comment type="interaction">
    <interactant intactId="EBI-526406">
        <id>O43521</id>
    </interactant>
    <interactant intactId="EBI-1003422">
        <id>Q07820</id>
        <label>MCL1</label>
    </interactant>
    <organismsDiffer>false</organismsDiffer>
    <experiments>18</experiments>
</comment>
<comment type="interaction">
    <interactant intactId="EBI-526406">
        <id>O43521</id>
    </interactant>
    <interactant intactId="EBI-2340269">
        <id>Q13064</id>
        <label>MKRN3</label>
    </interactant>
    <organismsDiffer>false</organismsDiffer>
    <experiments>3</experiments>
</comment>
<comment type="interaction">
    <interactant intactId="EBI-526406">
        <id>O43521</id>
    </interactant>
    <interactant intactId="EBI-395883">
        <id>P07237</id>
        <label>P4HB</label>
    </interactant>
    <organismsDiffer>false</organismsDiffer>
    <experiments>3</experiments>
</comment>
<comment type="interaction">
    <interactant intactId="EBI-526406">
        <id>O43521</id>
    </interactant>
    <interactant intactId="EBI-594747">
        <id>P40855</id>
        <label>PEX19</label>
    </interactant>
    <organismsDiffer>false</organismsDiffer>
    <experiments>3</experiments>
</comment>
<comment type="interaction">
    <interactant intactId="EBI-526406">
        <id>O43521</id>
    </interactant>
    <interactant intactId="EBI-296739">
        <id>P63244</id>
        <label>RACK1</label>
    </interactant>
    <organismsDiffer>false</organismsDiffer>
    <experiments>2</experiments>
</comment>
<comment type="interaction">
    <interactant intactId="EBI-526406">
        <id>O43521</id>
    </interactant>
    <interactant intactId="EBI-947187">
        <id>Q9UHD9</id>
        <label>UBQLN2</label>
    </interactant>
    <organismsDiffer>false</organismsDiffer>
    <experiments>3</experiments>
</comment>
<comment type="interaction">
    <interactant intactId="EBI-526406">
        <id>O43521</id>
    </interactant>
    <interactant intactId="EBI-739895">
        <id>Q8N6Y0</id>
        <label>USHBP1</label>
    </interactant>
    <organismsDiffer>false</organismsDiffer>
    <experiments>3</experiments>
</comment>
<comment type="interaction">
    <interactant intactId="EBI-526406">
        <id>O43521</id>
    </interactant>
    <interactant intactId="EBI-15666406">
        <id>Q07813-1</id>
        <label>Bax</label>
    </interactant>
    <organismsDiffer>true</organismsDiffer>
    <experiments>7</experiments>
</comment>
<comment type="interaction">
    <interactant intactId="EBI-526406">
        <id>O43521</id>
    </interactant>
    <interactant intactId="EBI-707754">
        <id>Q07440</id>
        <label>Bcl2a1</label>
    </interactant>
    <organismsDiffer>true</organismsDiffer>
    <experiments>2</experiments>
</comment>
<comment type="interaction">
    <interactant intactId="EBI-526406">
        <id>O43521</id>
    </interactant>
    <interactant intactId="EBI-707292">
        <id>P97287</id>
        <label>Mcl1</label>
    </interactant>
    <organismsDiffer>true</organismsDiffer>
    <experiments>7</experiments>
</comment>
<comment type="interaction">
    <interactant intactId="EBI-526406">
        <id>O43521</id>
    </interactant>
    <interactant intactId="EBI-2548993">
        <id>P03495</id>
        <label>NS</label>
    </interactant>
    <organismsDiffer>true</organismsDiffer>
    <experiments>2</experiments>
</comment>
<comment type="interaction">
    <interactant intactId="EBI-526406">
        <id>O43521</id>
    </interactant>
    <interactant intactId="EBI-7066119">
        <id>P68451</id>
        <label>OPG045</label>
    </interactant>
    <organismsDiffer>true</organismsDiffer>
    <experiments>4</experiments>
</comment>
<comment type="interaction">
    <interactant intactId="EBI-526416">
        <id>O43521-1</id>
    </interactant>
    <interactant intactId="EBI-77694">
        <id>P10415</id>
        <label>BCL2</label>
    </interactant>
    <organismsDiffer>false</organismsDiffer>
    <experiments>3</experiments>
</comment>
<comment type="interaction">
    <interactant intactId="EBI-526416">
        <id>O43521-1</id>
    </interactant>
    <interactant intactId="EBI-287195">
        <id>Q07817-1</id>
        <label>BCL2L1</label>
    </interactant>
    <organismsDiffer>false</organismsDiffer>
    <experiments>2</experiments>
</comment>
<comment type="interaction">
    <interactant intactId="EBI-526416">
        <id>O43521-1</id>
    </interactant>
    <interactant intactId="EBI-2126349">
        <id>Q9HD36</id>
        <label>BCL2L10</label>
    </interactant>
    <organismsDiffer>false</organismsDiffer>
    <experiments>2</experiments>
</comment>
<comment type="interaction">
    <interactant intactId="EBI-526420">
        <id>O43521-2</id>
    </interactant>
    <interactant intactId="EBI-77694">
        <id>P10415</id>
        <label>BCL2</label>
    </interactant>
    <organismsDiffer>false</organismsDiffer>
    <experiments>4</experiments>
</comment>
<comment type="interaction">
    <interactant intactId="EBI-526420">
        <id>O43521-2</id>
    </interactant>
    <interactant intactId="EBI-372712">
        <id>P14174</id>
        <label>MIF</label>
    </interactant>
    <organismsDiffer>false</organismsDiffer>
    <experiments>5</experiments>
</comment>
<comment type="subcellular location">
    <subcellularLocation>
        <location evidence="1">Endomembrane system</location>
        <topology evidence="1">Peripheral membrane protein</topology>
    </subcellularLocation>
    <text evidence="1">Associated with intracytoplasmic membranes.</text>
</comment>
<comment type="subcellular location">
    <molecule>Isoform BimEL</molecule>
    <subcellularLocation>
        <location>Mitochondrion</location>
    </subcellularLocation>
    <text>Translocates from microtubules to mitochondria on loss of cell adherence.</text>
</comment>
<comment type="subcellular location">
    <molecule>Isoform BimL</molecule>
    <subcellularLocation>
        <location>Mitochondrion</location>
    </subcellularLocation>
</comment>
<comment type="subcellular location">
    <molecule>Isoform BimS</molecule>
    <subcellularLocation>
        <location>Mitochondrion</location>
    </subcellularLocation>
</comment>
<comment type="subcellular location">
    <molecule>Isoform Bim-alpha1</molecule>
    <subcellularLocation>
        <location>Mitochondrion</location>
    </subcellularLocation>
</comment>
<comment type="alternative products">
    <event type="alternative splicing"/>
    <isoform>
        <id>O43521-1</id>
        <name>BimEL</name>
        <name>Bim(EL)</name>
        <sequence type="displayed"/>
    </isoform>
    <isoform>
        <id>O43521-2</id>
        <name>BimL</name>
        <name>Bim(L)</name>
        <sequence type="described" ref="VSP_000535"/>
    </isoform>
    <isoform>
        <id>O43521-3</id>
        <name>BimS</name>
        <name>BCL2-like 11 transcript variant 9</name>
        <name>Bim(S)</name>
        <sequence type="described" ref="VSP_035608"/>
    </isoform>
    <isoform>
        <id>O43521-4</id>
        <name>Bim-alpha1</name>
        <name>BimABCD</name>
        <name>Bim-ABCD</name>
        <sequence type="described" ref="VSP_035620"/>
    </isoform>
    <isoform>
        <id>O43521-5</id>
        <name>Bim-alpha2</name>
        <name>BimACD</name>
        <name>Bim-ACD</name>
        <sequence type="described" ref="VSP_000535 VSP_035620"/>
    </isoform>
    <isoform>
        <id>O43521-6</id>
        <name>Bim-alpha3</name>
        <name>BCL2-like 11 transcript variant 10</name>
        <name>BimAD</name>
        <name>Bim-AD</name>
        <sequence type="described" ref="VSP_035608 VSP_035620"/>
    </isoform>
    <isoform>
        <id>O43521-7</id>
        <name>Bim-alpha4</name>
        <sequence type="described" ref="VSP_035608 VSP_035618"/>
    </isoform>
    <isoform>
        <id>O43521-8</id>
        <name>Bim-alpha5</name>
        <sequence type="described" ref="VSP_035619"/>
    </isoform>
    <isoform>
        <id>O43521-9</id>
        <name>Bim-alpha6</name>
        <sequence type="described" ref="VSP_035608 VSP_035619"/>
    </isoform>
    <isoform>
        <id>O43521-10</id>
        <name>Bim-beta1</name>
        <sequence type="described" ref="VSP_035615 VSP_035616"/>
    </isoform>
    <isoform>
        <id>O43521-11</id>
        <name>Bim-beta2</name>
        <sequence type="described" ref="VSP_035614 VSP_035616"/>
    </isoform>
    <isoform>
        <id>O43521-12</id>
        <name>Bim-beta3</name>
        <sequence type="described" ref="VSP_035609"/>
    </isoform>
    <isoform>
        <id>O43521-13</id>
        <name>Bim-beta4</name>
        <sequence type="described" ref="VSP_035610 VSP_035611"/>
    </isoform>
    <isoform>
        <id>O43521-14</id>
        <name>Bim-beta5</name>
        <sequence type="described" ref="VSP_035613 VSP_035617"/>
    </isoform>
    <isoform>
        <id>O43521-15</id>
        <name>Bim-beta6</name>
        <sequence type="described" ref="VSP_000535 VSP_035614 VSP_035616"/>
    </isoform>
    <isoform>
        <id>O43521-16</id>
        <name>Bim-beta7</name>
        <sequence type="described" ref="VSP_000535 VSP_035613 VSP_035617"/>
    </isoform>
    <isoform>
        <id>O43521-17</id>
        <name>Bim-gamma</name>
        <sequence type="described" ref="VSP_000535 VSP_035612"/>
    </isoform>
    <isoform>
        <id>O43521-18</id>
        <name>BimABC</name>
        <name>Bim-ABC</name>
        <sequence type="described" ref="VSP_000535 VSP_042866"/>
    </isoform>
    <isoform>
        <id>O43521-19</id>
        <name>BimAC</name>
        <name>Bim-AC</name>
        <sequence type="described" ref="VSP_042866"/>
    </isoform>
    <isoform>
        <id>O43521-20</id>
        <name>BimA</name>
        <name>Bim-A</name>
        <sequence type="described" ref="VSP_042865"/>
    </isoform>
</comment>
<comment type="tissue specificity">
    <text evidence="6">Isoform BimEL, isoform BimL and isoform BimS are the predominant isoforms and are widely expressed with tissue-specific variation. Isoform Bim-gamma is most abundantly expressed in small intestine and colon, and in lower levels in spleen, prostate, testis, heart, liver and kidney.</text>
</comment>
<comment type="induction">
    <text evidence="15">By ER stress in a DDIT3/CHOP-dependent manner.</text>
</comment>
<comment type="domain">
    <text evidence="2">The BH3 motif is required for interaction with Bcl-2 proteins and cytotoxicity.</text>
</comment>
<comment type="PTM">
    <text evidence="2 7 13">Phosphorylation at Ser-69 by MAPK1/MAPK3 leads to interaction with TRIM2 and polyubiquitination, followed by proteasomal degradation (PubMed:15486195, PubMed:21478148). Deubiquitination catalyzed by USP27X stabilizes the protein (By similarity).</text>
</comment>
<comment type="PTM">
    <text evidence="2">Ubiquitination by TRIM2 following phosphorylation by MAPK1/MAPK3 leads to proteasomal degradation. Conversely, deubiquitination catalyzed by USP27X stabilizes the protein.</text>
</comment>
<comment type="similarity">
    <text evidence="27">Belongs to the Bcl-2 family.</text>
</comment>
<comment type="online information" name="Atlas of Genetics and Cytogenetics in Oncology and Haematology">
    <link uri="https://atlasgeneticsoncology.org/gene/772/BCL2L11"/>
</comment>
<reference key="1">
    <citation type="journal article" date="1998" name="EMBO J.">
        <title>Bim: a novel member of the Bcl-2 family that promotes apoptosis.</title>
        <authorList>
            <person name="O'Connor L."/>
            <person name="Strasser A."/>
            <person name="O'Reilly L.A."/>
            <person name="Hausmann G."/>
            <person name="Adams J.M."/>
            <person name="Cory S."/>
            <person name="Huang D.C.S."/>
        </authorList>
    </citation>
    <scope>NUCLEOTIDE SEQUENCE [MRNA] (ISOFORMS BIMEL AND BIML)</scope>
    <scope>FUNCTION</scope>
    <source>
        <tissue>Peripheral blood</tissue>
        <tissue>Spleen</tissue>
    </source>
</reference>
<reference key="2">
    <citation type="journal article" date="2001" name="FEBS Lett.">
        <title>Molecular cloning and characterization of six novel isoforms of human Bim, a member of the proapoptotic Bcl-2 family.</title>
        <authorList>
            <person name="Mami U."/>
            <person name="Miyashita T."/>
            <person name="Shikama Y."/>
            <person name="Tadokoro K."/>
            <person name="Yamada M."/>
        </authorList>
    </citation>
    <scope>NUCLEOTIDE SEQUENCE [MRNA] (ISOFORMS BIM-ALPHA1; BIM-ALPHA2; BIM-BETA1; BIM-BETA2; BIM-BETA3 AND BIM-BETA4)</scope>
    <scope>FUNCTION (ISOFORMS BIM-ALPHA1 AND BIM-ALPHA2)</scope>
    <scope>SUBCELLULAR LOCATION</scope>
</reference>
<reference key="3">
    <citation type="journal article" date="2002" name="Cancer Res.">
        <title>Identification and characterization of Bimgamma, a novel proapoptotic BH3-only splice variant of Bim.</title>
        <authorList>
            <person name="Liu J.-W."/>
            <person name="Chandra D."/>
            <person name="Tang S.H."/>
            <person name="Chopra D."/>
            <person name="Tang D.G."/>
        </authorList>
    </citation>
    <scope>NUCLEOTIDE SEQUENCE [MRNA] (ISOFORM BIM-GAMMA)</scope>
    <scope>FUNCTION (ISOFORM BIM-GAMMA)</scope>
    <scope>SUBCELLULAR LOCATION</scope>
    <scope>TISSUE SPECIFICITY</scope>
</reference>
<reference key="4">
    <citation type="journal article" date="2002" name="Mol. Cell. Biol.">
        <title>Identification of novel isoforms of the BH3 domain protein Bim which directly activate Bax to trigger apoptosis.</title>
        <authorList>
            <person name="Marani M."/>
            <person name="Tenev T."/>
            <person name="Hancock D."/>
            <person name="Downward J."/>
            <person name="Lemoine N.R."/>
        </authorList>
    </citation>
    <scope>NUCLEOTIDE SEQUENCE [MRNA] (ISOFORMS BIMEL; BIML; BIMS; BIM-ALPHA1; BIM-ALPHA2; BIM-ALPHA3; BIMA; BIMABC AND BIMAC)</scope>
    <scope>ALTERNATIVE SPLICING</scope>
    <scope>FUNCTION</scope>
    <scope>INTERACTION WITH BCL2; BCL2L1 ISOFORM BCL-XL AND BAX</scope>
    <scope>MUTAGENESIS OF GLY-156 AND ASN-160</scope>
    <source>
        <tissue>Embryonic kidney</tissue>
        <tissue>Ovarian cancer</tissue>
    </source>
</reference>
<reference key="5">
    <citation type="journal article" date="2004" name="Int. J. Biochem. Cell Biol.">
        <title>Over-expression of Bim alpha3, a novel isoform of human Bim, result in cell apoptosis.</title>
        <authorList>
            <person name="Chen J.Z."/>
            <person name="Ji C.N."/>
            <person name="Gu S.H."/>
            <person name="Li J.X."/>
            <person name="Zhao E.P."/>
            <person name="Huang Y."/>
            <person name="Huang L."/>
            <person name="Ying K."/>
            <person name="Xie Y."/>
            <person name="Mao Y.M."/>
        </authorList>
    </citation>
    <scope>NUCLEOTIDE SEQUENCE [MRNA] (ISOFORMS BIMS AND BIM-ALPHA3)</scope>
    <scope>FUNCTION (ISOFORM BIM-ALPHA3)</scope>
</reference>
<reference key="6">
    <citation type="journal article" date="2007" name="Apoptosis">
        <title>Identification and characterization of BH3 domain protein Bim and its isoforms in human hepatocellular carcinomas.</title>
        <authorList>
            <person name="Miao J."/>
            <person name="Chen G.G."/>
            <person name="Yun J.P."/>
            <person name="Chun S.Y."/>
            <person name="Zheng Z.Z."/>
            <person name="Ho R.L.K."/>
            <person name="Chak E.C."/>
            <person name="Xia N.S."/>
            <person name="Lai P.B."/>
        </authorList>
    </citation>
    <scope>NUCLEOTIDE SEQUENCE [MRNA] (ISOFORMS BIM-ALPHA3; BIM-ALPHA4; BIM-ALPHA5; BIM-ALPHA6; BIM-BETA5; BIM-BETA6; BIM-BETA7)</scope>
</reference>
<reference key="7">
    <citation type="journal article" date="2004" name="Nat. Genet.">
        <title>Complete sequencing and characterization of 21,243 full-length human cDNAs.</title>
        <authorList>
            <person name="Ota T."/>
            <person name="Suzuki Y."/>
            <person name="Nishikawa T."/>
            <person name="Otsuki T."/>
            <person name="Sugiyama T."/>
            <person name="Irie R."/>
            <person name="Wakamatsu A."/>
            <person name="Hayashi K."/>
            <person name="Sato H."/>
            <person name="Nagai K."/>
            <person name="Kimura K."/>
            <person name="Makita H."/>
            <person name="Sekine M."/>
            <person name="Obayashi M."/>
            <person name="Nishi T."/>
            <person name="Shibahara T."/>
            <person name="Tanaka T."/>
            <person name="Ishii S."/>
            <person name="Yamamoto J."/>
            <person name="Saito K."/>
            <person name="Kawai Y."/>
            <person name="Isono Y."/>
            <person name="Nakamura Y."/>
            <person name="Nagahari K."/>
            <person name="Murakami K."/>
            <person name="Yasuda T."/>
            <person name="Iwayanagi T."/>
            <person name="Wagatsuma M."/>
            <person name="Shiratori A."/>
            <person name="Sudo H."/>
            <person name="Hosoiri T."/>
            <person name="Kaku Y."/>
            <person name="Kodaira H."/>
            <person name="Kondo H."/>
            <person name="Sugawara M."/>
            <person name="Takahashi M."/>
            <person name="Kanda K."/>
            <person name="Yokoi T."/>
            <person name="Furuya T."/>
            <person name="Kikkawa E."/>
            <person name="Omura Y."/>
            <person name="Abe K."/>
            <person name="Kamihara K."/>
            <person name="Katsuta N."/>
            <person name="Sato K."/>
            <person name="Tanikawa M."/>
            <person name="Yamazaki M."/>
            <person name="Ninomiya K."/>
            <person name="Ishibashi T."/>
            <person name="Yamashita H."/>
            <person name="Murakawa K."/>
            <person name="Fujimori K."/>
            <person name="Tanai H."/>
            <person name="Kimata M."/>
            <person name="Watanabe M."/>
            <person name="Hiraoka S."/>
            <person name="Chiba Y."/>
            <person name="Ishida S."/>
            <person name="Ono Y."/>
            <person name="Takiguchi S."/>
            <person name="Watanabe S."/>
            <person name="Yosida M."/>
            <person name="Hotuta T."/>
            <person name="Kusano J."/>
            <person name="Kanehori K."/>
            <person name="Takahashi-Fujii A."/>
            <person name="Hara H."/>
            <person name="Tanase T.-O."/>
            <person name="Nomura Y."/>
            <person name="Togiya S."/>
            <person name="Komai F."/>
            <person name="Hara R."/>
            <person name="Takeuchi K."/>
            <person name="Arita M."/>
            <person name="Imose N."/>
            <person name="Musashino K."/>
            <person name="Yuuki H."/>
            <person name="Oshima A."/>
            <person name="Sasaki N."/>
            <person name="Aotsuka S."/>
            <person name="Yoshikawa Y."/>
            <person name="Matsunawa H."/>
            <person name="Ichihara T."/>
            <person name="Shiohata N."/>
            <person name="Sano S."/>
            <person name="Moriya S."/>
            <person name="Momiyama H."/>
            <person name="Satoh N."/>
            <person name="Takami S."/>
            <person name="Terashima Y."/>
            <person name="Suzuki O."/>
            <person name="Nakagawa S."/>
            <person name="Senoh A."/>
            <person name="Mizoguchi H."/>
            <person name="Goto Y."/>
            <person name="Shimizu F."/>
            <person name="Wakebe H."/>
            <person name="Hishigaki H."/>
            <person name="Watanabe T."/>
            <person name="Sugiyama A."/>
            <person name="Takemoto M."/>
            <person name="Kawakami B."/>
            <person name="Yamazaki M."/>
            <person name="Watanabe K."/>
            <person name="Kumagai A."/>
            <person name="Itakura S."/>
            <person name="Fukuzumi Y."/>
            <person name="Fujimori Y."/>
            <person name="Komiyama M."/>
            <person name="Tashiro H."/>
            <person name="Tanigami A."/>
            <person name="Fujiwara T."/>
            <person name="Ono T."/>
            <person name="Yamada K."/>
            <person name="Fujii Y."/>
            <person name="Ozaki K."/>
            <person name="Hirao M."/>
            <person name="Ohmori Y."/>
            <person name="Kawabata A."/>
            <person name="Hikiji T."/>
            <person name="Kobatake N."/>
            <person name="Inagaki H."/>
            <person name="Ikema Y."/>
            <person name="Okamoto S."/>
            <person name="Okitani R."/>
            <person name="Kawakami T."/>
            <person name="Noguchi S."/>
            <person name="Itoh T."/>
            <person name="Shigeta K."/>
            <person name="Senba T."/>
            <person name="Matsumura K."/>
            <person name="Nakajima Y."/>
            <person name="Mizuno T."/>
            <person name="Morinaga M."/>
            <person name="Sasaki M."/>
            <person name="Togashi T."/>
            <person name="Oyama M."/>
            <person name="Hata H."/>
            <person name="Watanabe M."/>
            <person name="Komatsu T."/>
            <person name="Mizushima-Sugano J."/>
            <person name="Satoh T."/>
            <person name="Shirai Y."/>
            <person name="Takahashi Y."/>
            <person name="Nakagawa K."/>
            <person name="Okumura K."/>
            <person name="Nagase T."/>
            <person name="Nomura N."/>
            <person name="Kikuchi H."/>
            <person name="Masuho Y."/>
            <person name="Yamashita R."/>
            <person name="Nakai K."/>
            <person name="Yada T."/>
            <person name="Nakamura Y."/>
            <person name="Ohara O."/>
            <person name="Isogai T."/>
            <person name="Sugano S."/>
        </authorList>
    </citation>
    <scope>NUCLEOTIDE SEQUENCE [LARGE SCALE MRNA] (ISOFORMS BIMEL AND BIML)</scope>
    <source>
        <tissue>Teratocarcinoma</tissue>
        <tissue>Tongue</tissue>
    </source>
</reference>
<reference key="8">
    <citation type="journal article" date="2005" name="Nature">
        <title>Generation and annotation of the DNA sequences of human chromosomes 2 and 4.</title>
        <authorList>
            <person name="Hillier L.W."/>
            <person name="Graves T.A."/>
            <person name="Fulton R.S."/>
            <person name="Fulton L.A."/>
            <person name="Pepin K.H."/>
            <person name="Minx P."/>
            <person name="Wagner-McPherson C."/>
            <person name="Layman D."/>
            <person name="Wylie K."/>
            <person name="Sekhon M."/>
            <person name="Becker M.C."/>
            <person name="Fewell G.A."/>
            <person name="Delehaunty K.D."/>
            <person name="Miner T.L."/>
            <person name="Nash W.E."/>
            <person name="Kremitzki C."/>
            <person name="Oddy L."/>
            <person name="Du H."/>
            <person name="Sun H."/>
            <person name="Bradshaw-Cordum H."/>
            <person name="Ali J."/>
            <person name="Carter J."/>
            <person name="Cordes M."/>
            <person name="Harris A."/>
            <person name="Isak A."/>
            <person name="van Brunt A."/>
            <person name="Nguyen C."/>
            <person name="Du F."/>
            <person name="Courtney L."/>
            <person name="Kalicki J."/>
            <person name="Ozersky P."/>
            <person name="Abbott S."/>
            <person name="Armstrong J."/>
            <person name="Belter E.A."/>
            <person name="Caruso L."/>
            <person name="Cedroni M."/>
            <person name="Cotton M."/>
            <person name="Davidson T."/>
            <person name="Desai A."/>
            <person name="Elliott G."/>
            <person name="Erb T."/>
            <person name="Fronick C."/>
            <person name="Gaige T."/>
            <person name="Haakenson W."/>
            <person name="Haglund K."/>
            <person name="Holmes A."/>
            <person name="Harkins R."/>
            <person name="Kim K."/>
            <person name="Kruchowski S.S."/>
            <person name="Strong C.M."/>
            <person name="Grewal N."/>
            <person name="Goyea E."/>
            <person name="Hou S."/>
            <person name="Levy A."/>
            <person name="Martinka S."/>
            <person name="Mead K."/>
            <person name="McLellan M.D."/>
            <person name="Meyer R."/>
            <person name="Randall-Maher J."/>
            <person name="Tomlinson C."/>
            <person name="Dauphin-Kohlberg S."/>
            <person name="Kozlowicz-Reilly A."/>
            <person name="Shah N."/>
            <person name="Swearengen-Shahid S."/>
            <person name="Snider J."/>
            <person name="Strong J.T."/>
            <person name="Thompson J."/>
            <person name="Yoakum M."/>
            <person name="Leonard S."/>
            <person name="Pearman C."/>
            <person name="Trani L."/>
            <person name="Radionenko M."/>
            <person name="Waligorski J.E."/>
            <person name="Wang C."/>
            <person name="Rock S.M."/>
            <person name="Tin-Wollam A.-M."/>
            <person name="Maupin R."/>
            <person name="Latreille P."/>
            <person name="Wendl M.C."/>
            <person name="Yang S.-P."/>
            <person name="Pohl C."/>
            <person name="Wallis J.W."/>
            <person name="Spieth J."/>
            <person name="Bieri T.A."/>
            <person name="Berkowicz N."/>
            <person name="Nelson J.O."/>
            <person name="Osborne J."/>
            <person name="Ding L."/>
            <person name="Meyer R."/>
            <person name="Sabo A."/>
            <person name="Shotland Y."/>
            <person name="Sinha P."/>
            <person name="Wohldmann P.E."/>
            <person name="Cook L.L."/>
            <person name="Hickenbotham M.T."/>
            <person name="Eldred J."/>
            <person name="Williams D."/>
            <person name="Jones T.A."/>
            <person name="She X."/>
            <person name="Ciccarelli F.D."/>
            <person name="Izaurralde E."/>
            <person name="Taylor J."/>
            <person name="Schmutz J."/>
            <person name="Myers R.M."/>
            <person name="Cox D.R."/>
            <person name="Huang X."/>
            <person name="McPherson J.D."/>
            <person name="Mardis E.R."/>
            <person name="Clifton S.W."/>
            <person name="Warren W.C."/>
            <person name="Chinwalla A.T."/>
            <person name="Eddy S.R."/>
            <person name="Marra M.A."/>
            <person name="Ovcharenko I."/>
            <person name="Furey T.S."/>
            <person name="Miller W."/>
            <person name="Eichler E.E."/>
            <person name="Bork P."/>
            <person name="Suyama M."/>
            <person name="Torrents D."/>
            <person name="Waterston R.H."/>
            <person name="Wilson R.K."/>
        </authorList>
    </citation>
    <scope>NUCLEOTIDE SEQUENCE [LARGE SCALE GENOMIC DNA]</scope>
</reference>
<reference key="9">
    <citation type="submission" date="2005-07" db="EMBL/GenBank/DDBJ databases">
        <authorList>
            <person name="Mural R.J."/>
            <person name="Istrail S."/>
            <person name="Sutton G.G."/>
            <person name="Florea L."/>
            <person name="Halpern A.L."/>
            <person name="Mobarry C.M."/>
            <person name="Lippert R."/>
            <person name="Walenz B."/>
            <person name="Shatkay H."/>
            <person name="Dew I."/>
            <person name="Miller J.R."/>
            <person name="Flanigan M.J."/>
            <person name="Edwards N.J."/>
            <person name="Bolanos R."/>
            <person name="Fasulo D."/>
            <person name="Halldorsson B.V."/>
            <person name="Hannenhalli S."/>
            <person name="Turner R."/>
            <person name="Yooseph S."/>
            <person name="Lu F."/>
            <person name="Nusskern D.R."/>
            <person name="Shue B.C."/>
            <person name="Zheng X.H."/>
            <person name="Zhong F."/>
            <person name="Delcher A.L."/>
            <person name="Huson D.H."/>
            <person name="Kravitz S.A."/>
            <person name="Mouchard L."/>
            <person name="Reinert K."/>
            <person name="Remington K.A."/>
            <person name="Clark A.G."/>
            <person name="Waterman M.S."/>
            <person name="Eichler E.E."/>
            <person name="Adams M.D."/>
            <person name="Hunkapiller M.W."/>
            <person name="Myers E.W."/>
            <person name="Venter J.C."/>
        </authorList>
    </citation>
    <scope>NUCLEOTIDE SEQUENCE [LARGE SCALE GENOMIC DNA]</scope>
</reference>
<reference key="10">
    <citation type="journal article" date="2004" name="Genome Res.">
        <title>The status, quality, and expansion of the NIH full-length cDNA project: the Mammalian Gene Collection (MGC).</title>
        <authorList>
            <consortium name="The MGC Project Team"/>
        </authorList>
    </citation>
    <scope>NUCLEOTIDE SEQUENCE [LARGE SCALE MRNA] (ISOFORM BIMEL)</scope>
    <source>
        <tissue>Blood</tissue>
    </source>
</reference>
<reference key="11">
    <citation type="journal article" date="2004" name="Mol. Cancer Ther.">
        <title>BimEL is an important determinant for induction of anoikis sensitivity by mitogen-activated protein/extracellular signal-regulated kinase kinase inhibitors.</title>
        <authorList>
            <person name="Fukazawa H."/>
            <person name="Noguchi K."/>
            <person name="Masumi A."/>
            <person name="Murakami Y."/>
            <person name="Uehara Y."/>
        </authorList>
    </citation>
    <scope>FUNCTION</scope>
    <scope>SUBCELLULAR LOCATION</scope>
    <scope>PHOSPHORYLATION AT SER-69</scope>
    <scope>UBIQUITINATION</scope>
</reference>
<reference key="12">
    <citation type="journal article" date="2005" name="J. Biol. Chem.">
        <title>Cytoprotective peptide humanin binds and inhibits proapoptotic Bcl-2/Bax family protein BimEL.</title>
        <authorList>
            <person name="Luciano F."/>
            <person name="Zhai D."/>
            <person name="Zhu X."/>
            <person name="Bailly-Maitre B."/>
            <person name="Ricci J.E."/>
            <person name="Satterthwait A.C."/>
            <person name="Reed J.C."/>
        </authorList>
    </citation>
    <scope>FUNCTION</scope>
    <scope>INTERACTION WITH HUMANIN</scope>
</reference>
<reference key="13">
    <citation type="journal article" date="2006" name="PLoS Biol.">
        <title>IAN family critically regulates survival and development of T lymphocytes.</title>
        <authorList>
            <person name="Nitta T."/>
            <person name="Nasreen M."/>
            <person name="Seike T."/>
            <person name="Goji A."/>
            <person name="Ohigashi I."/>
            <person name="Miyazaki T."/>
            <person name="Ohta T."/>
            <person name="Kanno M."/>
            <person name="Takahama Y."/>
        </authorList>
    </citation>
    <scope>INTERACTION WITH GIMAP5</scope>
</reference>
<reference key="14">
    <citation type="journal article" date="2007" name="Science">
        <title>Apoptosis initiated when BH3 ligands engage multiple Bcl-2 homologs, not Bax or Bak.</title>
        <authorList>
            <person name="Willis S.N."/>
            <person name="Fletcher J.I."/>
            <person name="Kaufmann T."/>
            <person name="van Delft M.F."/>
            <person name="Chen L."/>
            <person name="Czabotar P.E."/>
            <person name="Ierino H."/>
            <person name="Lee E.F."/>
            <person name="Fairlie W.D."/>
            <person name="Bouillet P."/>
            <person name="Strasser A."/>
            <person name="Kluck R.M."/>
            <person name="Adams J.M."/>
            <person name="Huang D.C."/>
        </authorList>
    </citation>
    <scope>MUTAGENESIS OF GLY-156</scope>
</reference>
<reference key="15">
    <citation type="journal article" date="2009" name="Sci. Signal.">
        <title>Quantitative phosphoproteomic analysis of T cell receptor signaling reveals system-wide modulation of protein-protein interactions.</title>
        <authorList>
            <person name="Mayya V."/>
            <person name="Lundgren D.H."/>
            <person name="Hwang S.-I."/>
            <person name="Rezaul K."/>
            <person name="Wu L."/>
            <person name="Eng J.K."/>
            <person name="Rodionov V."/>
            <person name="Han D.K."/>
        </authorList>
    </citation>
    <scope>IDENTIFICATION BY MASS SPECTROMETRY [LARGE SCALE ANALYSIS]</scope>
    <source>
        <tissue>Leukemic T-cell</tissue>
    </source>
</reference>
<reference key="16">
    <citation type="journal article" date="2011" name="J. Biol. Chem.">
        <title>Identification of a novel Bcl-2-interacting mediator of cell death (Bim) E3 ligase, tripartite motif-containing protein 2 (TRIM2), and its role in rapid ischemic tolerance-induced neuroprotection.</title>
        <authorList>
            <person name="Thompson S."/>
            <person name="Pearson A.N."/>
            <person name="Ashley M.D."/>
            <person name="Jessick V."/>
            <person name="Murphy B.M."/>
            <person name="Gafken P."/>
            <person name="Henshall D.C."/>
            <person name="Morris K.T."/>
            <person name="Simon R.P."/>
            <person name="Meller R."/>
        </authorList>
    </citation>
    <scope>INTERACTION WITH TRIM2</scope>
</reference>
<reference key="17">
    <citation type="journal article" date="2012" name="Autophagy">
        <title>The anti-apoptotic Bcl-B protein inhibits BECN1-dependent autophagic cell death.</title>
        <authorList>
            <person name="Robert G."/>
            <person name="Gastaldi C."/>
            <person name="Puissant A."/>
            <person name="Hamouda A."/>
            <person name="Jacquel A."/>
            <person name="Dufies M."/>
            <person name="Belhacene N."/>
            <person name="Colosetti P."/>
            <person name="Reed J.C."/>
            <person name="Auberger P."/>
            <person name="Luciano F."/>
        </authorList>
    </citation>
    <scope>INTERACTION WITH BCL2L10</scope>
</reference>
<reference key="18">
    <citation type="journal article" date="2012" name="PLoS ONE">
        <title>CHOP potentially co-operates with FOXO3a in neuronal cells to regulate PUMA and BIM expression in response to ER stress.</title>
        <authorList>
            <person name="Ghosh A.P."/>
            <person name="Klocke B.J."/>
            <person name="Ballestas M.E."/>
            <person name="Roth K.A."/>
        </authorList>
    </citation>
    <scope>INDUCTION BY ER STRESS</scope>
</reference>
<reference key="19">
    <citation type="journal article" date="2013" name="Oncogene">
        <title>Polyubiquitination and proteasomal turnover controls the anti-apoptotic activity of Bcl-B.</title>
        <authorList>
            <person name="van de Kooij B."/>
            <person name="Rooswinkel R.W."/>
            <person name="Kok F."/>
            <person name="Herrebout M."/>
            <person name="de Vries E."/>
            <person name="Paauwe M."/>
            <person name="Janssen G.M."/>
            <person name="van Veelen P.A."/>
            <person name="Borst J."/>
        </authorList>
    </citation>
    <scope>INTERACTION WITH BCL2L10</scope>
</reference>
<reference key="20">
    <citation type="journal article" date="2013" name="J. Proteome Res.">
        <title>Toward a comprehensive characterization of a human cancer cell phosphoproteome.</title>
        <authorList>
            <person name="Zhou H."/>
            <person name="Di Palma S."/>
            <person name="Preisinger C."/>
            <person name="Peng M."/>
            <person name="Polat A.N."/>
            <person name="Heck A.J."/>
            <person name="Mohammed S."/>
        </authorList>
    </citation>
    <scope>PHOSPHORYLATION [LARGE SCALE ANALYSIS] AT SER-94</scope>
    <scope>IDENTIFICATION BY MASS SPECTROMETRY [LARGE SCALE ANALYSIS]</scope>
    <source>
        <tissue>Cervix carcinoma</tissue>
        <tissue>Erythroleukemia</tissue>
    </source>
</reference>
<reference key="21">
    <citation type="journal article" date="2016" name="EMBO Rep.">
        <title>The deubiquitinase Usp27x stabilizes the BH3-only protein Bim and enhances apoptosis.</title>
        <authorList>
            <person name="Weber A."/>
            <person name="Heinlein M."/>
            <person name="Dengjel J."/>
            <person name="Alber C."/>
            <person name="Singh P.K."/>
            <person name="Haecker G."/>
        </authorList>
    </citation>
    <scope>INTERACTION WITH BCL2L1; MCL1 AND USP27X</scope>
</reference>
<reference key="22">
    <citation type="journal article" date="2007" name="Proc. Natl. Acad. Sci. U.S.A.">
        <title>Structural insights into the degradation of Mcl-1 induced by BH3 domains.</title>
        <authorList>
            <person name="Czabotar P.E."/>
            <person name="Lee E.F."/>
            <person name="van Delft M.F."/>
            <person name="Day C.L."/>
            <person name="Smith B.J."/>
            <person name="Huang D.C.S."/>
            <person name="Fairlie W.D."/>
            <person name="Hinds M.G."/>
            <person name="Colman P.M."/>
        </authorList>
    </citation>
    <scope>X-RAY CRYSTALLOGRAPHY (1.55 ANGSTROMS) OF 141-166 IN COMPLEX WITH MCL1</scope>
</reference>
<reference key="23">
    <citation type="journal article" date="2008" name="FEBS Lett.">
        <title>Completing the family portrait of the anti-apoptotic Bcl-2 proteins: crystal structure of human Bfl-1 in complex with Bim.</title>
        <authorList>
            <person name="Herman M.D."/>
            <person name="Nyman T."/>
            <person name="Welin M."/>
            <person name="Lehtio L."/>
            <person name="Flodin S."/>
            <person name="Tresaugues L."/>
            <person name="Kotenyova T."/>
            <person name="Flores A."/>
            <person name="Nordlund P."/>
        </authorList>
    </citation>
    <scope>X-RAY CRYSTALLOGRAPHY (2.2 ANGSTROMS) OF 141-165 IN COMPLEX WITH BCL2A1</scope>
</reference>
<reference evidence="28" key="24">
    <citation type="journal article" date="2012" name="Cell Death Dis.">
        <title>The restricted binding repertoire of Bcl-B leaves Bim as the universal BH3-only prosurvival Bcl-2 protein antagonist.</title>
        <authorList>
            <person name="Rautureau G.J."/>
            <person name="Yabal M."/>
            <person name="Yang H."/>
            <person name="Huang D.C."/>
            <person name="Kvansakul M."/>
            <person name="Hinds M.G."/>
        </authorList>
    </citation>
    <scope>X-RAY CRYSTALLOGRAPHY (1.9 ANGSTROMS) OF 51-76 IN COMPLEX WITH BCL2L10</scope>
    <scope>INTERACTION WITH BCL2L10</scope>
</reference>
<keyword id="KW-0002">3D-structure</keyword>
<keyword id="KW-0025">Alternative splicing</keyword>
<keyword id="KW-0053">Apoptosis</keyword>
<keyword id="KW-0472">Membrane</keyword>
<keyword id="KW-0496">Mitochondrion</keyword>
<keyword id="KW-0597">Phosphoprotein</keyword>
<keyword id="KW-1267">Proteomics identification</keyword>
<keyword id="KW-1185">Reference proteome</keyword>
<keyword id="KW-0832">Ubl conjugation</keyword>
<dbReference type="EMBL" id="AF032457">
    <property type="protein sequence ID" value="AAC39593.1"/>
    <property type="molecule type" value="mRNA"/>
</dbReference>
<dbReference type="EMBL" id="AF032458">
    <property type="protein sequence ID" value="AAC39594.1"/>
    <property type="molecule type" value="mRNA"/>
</dbReference>
<dbReference type="EMBL" id="AB071195">
    <property type="protein sequence ID" value="BAB78589.1"/>
    <property type="molecule type" value="mRNA"/>
</dbReference>
<dbReference type="EMBL" id="AB071196">
    <property type="protein sequence ID" value="BAB78590.1"/>
    <property type="molecule type" value="mRNA"/>
</dbReference>
<dbReference type="EMBL" id="AB071197">
    <property type="protein sequence ID" value="BAB78591.1"/>
    <property type="molecule type" value="mRNA"/>
</dbReference>
<dbReference type="EMBL" id="AB071198">
    <property type="protein sequence ID" value="BAB78592.1"/>
    <property type="molecule type" value="mRNA"/>
</dbReference>
<dbReference type="EMBL" id="AB071199">
    <property type="protein sequence ID" value="BAB78593.1"/>
    <property type="molecule type" value="mRNA"/>
</dbReference>
<dbReference type="EMBL" id="AB071200">
    <property type="protein sequence ID" value="BAB78594.1"/>
    <property type="molecule type" value="mRNA"/>
</dbReference>
<dbReference type="EMBL" id="AY352518">
    <property type="protein sequence ID" value="AAQ62569.1"/>
    <property type="molecule type" value="mRNA"/>
</dbReference>
<dbReference type="EMBL" id="AY305714">
    <property type="protein sequence ID" value="AAQ82546.1"/>
    <property type="molecule type" value="mRNA"/>
</dbReference>
<dbReference type="EMBL" id="AY305715">
    <property type="protein sequence ID" value="AAQ82547.1"/>
    <property type="molecule type" value="mRNA"/>
</dbReference>
<dbReference type="EMBL" id="AY423441">
    <property type="protein sequence ID" value="AAQ99148.1"/>
    <property type="molecule type" value="mRNA"/>
</dbReference>
<dbReference type="EMBL" id="AY423442">
    <property type="protein sequence ID" value="AAQ99149.1"/>
    <property type="molecule type" value="mRNA"/>
</dbReference>
<dbReference type="EMBL" id="AY423443">
    <property type="protein sequence ID" value="AAQ99150.1"/>
    <property type="molecule type" value="mRNA"/>
</dbReference>
<dbReference type="EMBL" id="AY428962">
    <property type="protein sequence ID" value="AAR06908.1"/>
    <property type="molecule type" value="mRNA"/>
</dbReference>
<dbReference type="EMBL" id="DQ849200">
    <property type="protein sequence ID" value="ABI13589.1"/>
    <property type="molecule type" value="mRNA"/>
</dbReference>
<dbReference type="EMBL" id="DQ849201">
    <property type="protein sequence ID" value="ABI13590.1"/>
    <property type="molecule type" value="mRNA"/>
</dbReference>
<dbReference type="EMBL" id="DQ849202">
    <property type="protein sequence ID" value="ABI13591.1"/>
    <property type="molecule type" value="mRNA"/>
</dbReference>
<dbReference type="EMBL" id="AK290377">
    <property type="protein sequence ID" value="BAF83066.1"/>
    <property type="molecule type" value="mRNA"/>
</dbReference>
<dbReference type="EMBL" id="AK291269">
    <property type="protein sequence ID" value="BAF83958.1"/>
    <property type="molecule type" value="mRNA"/>
</dbReference>
<dbReference type="EMBL" id="AC096670">
    <property type="protein sequence ID" value="AAY14797.1"/>
    <property type="molecule type" value="Genomic_DNA"/>
</dbReference>
<dbReference type="EMBL" id="CH471237">
    <property type="protein sequence ID" value="EAW50365.1"/>
    <property type="molecule type" value="Genomic_DNA"/>
</dbReference>
<dbReference type="EMBL" id="CH471237">
    <property type="protein sequence ID" value="EAW50367.1"/>
    <property type="molecule type" value="Genomic_DNA"/>
</dbReference>
<dbReference type="EMBL" id="CH471237">
    <property type="protein sequence ID" value="EAW50369.1"/>
    <property type="molecule type" value="Genomic_DNA"/>
</dbReference>
<dbReference type="EMBL" id="CH471237">
    <property type="protein sequence ID" value="EAW50370.1"/>
    <property type="molecule type" value="Genomic_DNA"/>
</dbReference>
<dbReference type="EMBL" id="CH471237">
    <property type="protein sequence ID" value="EAW50371.1"/>
    <property type="molecule type" value="Genomic_DNA"/>
</dbReference>
<dbReference type="EMBL" id="CH471237">
    <property type="protein sequence ID" value="EAW50372.1"/>
    <property type="molecule type" value="Genomic_DNA"/>
</dbReference>
<dbReference type="EMBL" id="CH471237">
    <property type="protein sequence ID" value="EAW50373.1"/>
    <property type="molecule type" value="Genomic_DNA"/>
</dbReference>
<dbReference type="EMBL" id="CH471237">
    <property type="protein sequence ID" value="EAW50374.1"/>
    <property type="molecule type" value="Genomic_DNA"/>
</dbReference>
<dbReference type="EMBL" id="BC033694">
    <property type="protein sequence ID" value="AAH33694.1"/>
    <property type="molecule type" value="mRNA"/>
</dbReference>
<dbReference type="CCDS" id="CCDS2089.1">
    <molecule id="O43521-1"/>
</dbReference>
<dbReference type="CCDS" id="CCDS2092.1">
    <molecule id="O43521-17"/>
</dbReference>
<dbReference type="CCDS" id="CCDS42731.1">
    <molecule id="O43521-2"/>
</dbReference>
<dbReference type="CCDS" id="CCDS56131.1">
    <molecule id="O43521-16"/>
</dbReference>
<dbReference type="CCDS" id="CCDS56132.1">
    <molecule id="O43521-7"/>
</dbReference>
<dbReference type="CCDS" id="CCDS56133.1">
    <molecule id="O43521-9"/>
</dbReference>
<dbReference type="CCDS" id="CCDS56134.1">
    <molecule id="O43521-10"/>
</dbReference>
<dbReference type="CCDS" id="CCDS56135.1">
    <molecule id="O43521-8"/>
</dbReference>
<dbReference type="CCDS" id="CCDS56136.1">
    <molecule id="O43521-14"/>
</dbReference>
<dbReference type="CCDS" id="CCDS74560.1">
    <molecule id="O43521-4"/>
</dbReference>
<dbReference type="CCDS" id="CCDS74561.1">
    <molecule id="O43521-11"/>
</dbReference>
<dbReference type="RefSeq" id="NP_001191035.1">
    <molecule id="O43521-3"/>
    <property type="nucleotide sequence ID" value="NM_001204106.2"/>
</dbReference>
<dbReference type="RefSeq" id="NP_001191036.1">
    <molecule id="O43521-7"/>
    <property type="nucleotide sequence ID" value="NM_001204107.1"/>
</dbReference>
<dbReference type="RefSeq" id="NP_001191037.1">
    <molecule id="O43521-8"/>
    <property type="nucleotide sequence ID" value="NM_001204108.1"/>
</dbReference>
<dbReference type="RefSeq" id="NP_001191038.1">
    <molecule id="O43521-14"/>
    <property type="nucleotide sequence ID" value="NM_001204109.2"/>
</dbReference>
<dbReference type="RefSeq" id="NP_001191039.1">
    <molecule id="O43521-9"/>
    <property type="nucleotide sequence ID" value="NM_001204110.2"/>
</dbReference>
<dbReference type="RefSeq" id="NP_001191040.1">
    <molecule id="O43521-15"/>
    <property type="nucleotide sequence ID" value="NM_001204111.2"/>
</dbReference>
<dbReference type="RefSeq" id="NP_001191041.1">
    <molecule id="O43521-16"/>
    <property type="nucleotide sequence ID" value="NM_001204112.2"/>
</dbReference>
<dbReference type="RefSeq" id="NP_001191042.1">
    <property type="nucleotide sequence ID" value="NM_001204113.1"/>
</dbReference>
<dbReference type="RefSeq" id="NP_006529.1">
    <molecule id="O43521-2"/>
    <property type="nucleotide sequence ID" value="NM_006538.5"/>
</dbReference>
<dbReference type="RefSeq" id="NP_619527.1">
    <molecule id="O43521-1"/>
    <property type="nucleotide sequence ID" value="NM_138621.5"/>
</dbReference>
<dbReference type="RefSeq" id="NP_619528.1">
    <molecule id="O43521-4"/>
    <property type="nucleotide sequence ID" value="NM_138622.4"/>
</dbReference>
<dbReference type="RefSeq" id="NP_619529.1">
    <molecule id="O43521-5"/>
    <property type="nucleotide sequence ID" value="NM_138623.4"/>
</dbReference>
<dbReference type="RefSeq" id="NP_619530.1">
    <molecule id="O43521-10"/>
    <property type="nucleotide sequence ID" value="NM_138624.4"/>
</dbReference>
<dbReference type="RefSeq" id="NP_619531.1">
    <property type="nucleotide sequence ID" value="NM_138625.3"/>
</dbReference>
<dbReference type="RefSeq" id="NP_619532.1">
    <molecule id="O43521-11"/>
    <property type="nucleotide sequence ID" value="NM_138626.4"/>
</dbReference>
<dbReference type="RefSeq" id="NP_619533.1">
    <property type="nucleotide sequence ID" value="NM_138627.3"/>
</dbReference>
<dbReference type="RefSeq" id="NP_996885.1">
    <molecule id="O43521-17"/>
    <property type="nucleotide sequence ID" value="NM_207002.3"/>
</dbReference>
<dbReference type="RefSeq" id="NP_996886.1">
    <molecule id="O43521-6"/>
    <property type="nucleotide sequence ID" value="NM_207003.3"/>
</dbReference>
<dbReference type="RefSeq" id="XP_005263616.2">
    <molecule id="O43521-3"/>
    <property type="nucleotide sequence ID" value="XM_005263559.4"/>
</dbReference>
<dbReference type="RefSeq" id="XP_047298055.1">
    <molecule id="O43521-8"/>
    <property type="nucleotide sequence ID" value="XM_047442099.1"/>
</dbReference>
<dbReference type="RefSeq" id="XP_047298057.1">
    <molecule id="O43521-10"/>
    <property type="nucleotide sequence ID" value="XM_047442101.1"/>
</dbReference>
<dbReference type="PDB" id="1F95">
    <property type="method" value="NMR"/>
    <property type="chains" value="C/D=108-116"/>
</dbReference>
<dbReference type="PDB" id="2K7W">
    <property type="method" value="NMR"/>
    <property type="chains" value="B=145-164"/>
</dbReference>
<dbReference type="PDB" id="2NL9">
    <property type="method" value="X-ray"/>
    <property type="resolution" value="1.55 A"/>
    <property type="chains" value="B=141-166"/>
</dbReference>
<dbReference type="PDB" id="2V6Q">
    <property type="method" value="X-ray"/>
    <property type="resolution" value="2.70 A"/>
    <property type="chains" value="B=141-166"/>
</dbReference>
<dbReference type="PDB" id="2VM6">
    <property type="method" value="X-ray"/>
    <property type="resolution" value="2.20 A"/>
    <property type="chains" value="B=141-165"/>
</dbReference>
<dbReference type="PDB" id="2WH6">
    <property type="method" value="X-ray"/>
    <property type="resolution" value="1.50 A"/>
    <property type="chains" value="B=141-166"/>
</dbReference>
<dbReference type="PDB" id="2YQ6">
    <property type="method" value="X-ray"/>
    <property type="resolution" value="1.80 A"/>
    <property type="chains" value="B=147-164"/>
</dbReference>
<dbReference type="PDB" id="2YQ7">
    <property type="method" value="X-ray"/>
    <property type="resolution" value="1.90 A"/>
    <property type="chains" value="B=147-164"/>
</dbReference>
<dbReference type="PDB" id="3D7V">
    <property type="method" value="X-ray"/>
    <property type="resolution" value="2.03 A"/>
    <property type="chains" value="B=141-166"/>
</dbReference>
<dbReference type="PDB" id="3FDL">
    <property type="method" value="X-ray"/>
    <property type="resolution" value="1.78 A"/>
    <property type="chains" value="B=141-166"/>
</dbReference>
<dbReference type="PDB" id="3IO8">
    <property type="method" value="X-ray"/>
    <property type="resolution" value="2.30 A"/>
    <property type="chains" value="B/D=141-166"/>
</dbReference>
<dbReference type="PDB" id="3IO9">
    <property type="method" value="X-ray"/>
    <property type="resolution" value="2.40 A"/>
    <property type="chains" value="B=141-166"/>
</dbReference>
<dbReference type="PDB" id="3KJ0">
    <property type="method" value="X-ray"/>
    <property type="resolution" value="1.70 A"/>
    <property type="chains" value="B=143-165"/>
</dbReference>
<dbReference type="PDB" id="3KJ1">
    <property type="method" value="X-ray"/>
    <property type="resolution" value="1.94 A"/>
    <property type="chains" value="B=143-163"/>
</dbReference>
<dbReference type="PDB" id="3KJ2">
    <property type="method" value="X-ray"/>
    <property type="resolution" value="2.35 A"/>
    <property type="chains" value="B=143-163"/>
</dbReference>
<dbReference type="PDB" id="4A1U">
    <property type="method" value="X-ray"/>
    <property type="resolution" value="1.54 A"/>
    <property type="chains" value="B=146-163"/>
</dbReference>
<dbReference type="PDB" id="4A1W">
    <property type="method" value="X-ray"/>
    <property type="resolution" value="2.50 A"/>
    <property type="chains" value="P/Q/R/S=146-163"/>
</dbReference>
<dbReference type="PDB" id="4B4S">
    <property type="method" value="X-ray"/>
    <property type="resolution" value="1.90 A"/>
    <property type="chains" value="B=141-166"/>
</dbReference>
<dbReference type="PDB" id="4D2M">
    <property type="method" value="X-ray"/>
    <property type="resolution" value="2.10 A"/>
    <property type="chains" value="B/D=141-166"/>
</dbReference>
<dbReference type="PDB" id="4QVF">
    <property type="method" value="X-ray"/>
    <property type="resolution" value="1.53 A"/>
    <property type="chains" value="B=141-166"/>
</dbReference>
<dbReference type="PDB" id="4UF3">
    <property type="method" value="X-ray"/>
    <property type="resolution" value="2.70 A"/>
    <property type="chains" value="B=141-166"/>
</dbReference>
<dbReference type="PDB" id="4YJ4">
    <property type="method" value="X-ray"/>
    <property type="resolution" value="2.10 A"/>
    <property type="chains" value="B=146-165"/>
</dbReference>
<dbReference type="PDB" id="4ZIE">
    <property type="method" value="X-ray"/>
    <property type="resolution" value="1.80 A"/>
    <property type="chains" value="C=141-166"/>
</dbReference>
<dbReference type="PDB" id="4ZIF">
    <property type="method" value="X-ray"/>
    <property type="resolution" value="2.40 A"/>
    <property type="chains" value="B=141-160"/>
</dbReference>
<dbReference type="PDB" id="4ZIH">
    <property type="method" value="X-ray"/>
    <property type="resolution" value="2.50 A"/>
    <property type="chains" value="B=141-160"/>
</dbReference>
<dbReference type="PDB" id="5AGW">
    <property type="method" value="X-ray"/>
    <property type="resolution" value="2.69 A"/>
    <property type="chains" value="C/D=146-166"/>
</dbReference>
<dbReference type="PDB" id="5AGX">
    <property type="method" value="X-ray"/>
    <property type="resolution" value="2.24 A"/>
    <property type="chains" value="C/D=146-166"/>
</dbReference>
<dbReference type="PDB" id="5C3G">
    <property type="method" value="X-ray"/>
    <property type="resolution" value="2.45 A"/>
    <property type="chains" value="B=146-166"/>
</dbReference>
<dbReference type="PDB" id="5VWV">
    <property type="method" value="X-ray"/>
    <property type="resolution" value="1.90 A"/>
    <property type="chains" value="B=141-165"/>
</dbReference>
<dbReference type="PDB" id="5VWW">
    <property type="method" value="X-ray"/>
    <property type="resolution" value="2.80 A"/>
    <property type="chains" value="C/D=141-166"/>
</dbReference>
<dbReference type="PDB" id="5VWX">
    <property type="method" value="X-ray"/>
    <property type="resolution" value="2.49 A"/>
    <property type="chains" value="B/D=142-164"/>
</dbReference>
<dbReference type="PDB" id="5VWY">
    <property type="method" value="X-ray"/>
    <property type="resolution" value="1.55 A"/>
    <property type="chains" value="B=141-166"/>
</dbReference>
<dbReference type="PDB" id="5VWZ">
    <property type="method" value="X-ray"/>
    <property type="resolution" value="1.62 A"/>
    <property type="chains" value="B/D=141-166"/>
</dbReference>
<dbReference type="PDB" id="5VX0">
    <property type="method" value="X-ray"/>
    <property type="resolution" value="1.60 A"/>
    <property type="chains" value="B/D=141-166"/>
</dbReference>
<dbReference type="PDB" id="5VX2">
    <property type="method" value="X-ray"/>
    <property type="resolution" value="1.85 A"/>
    <property type="chains" value="B/D=141-166"/>
</dbReference>
<dbReference type="PDB" id="5VX3">
    <property type="method" value="X-ray"/>
    <property type="resolution" value="1.95 A"/>
    <property type="chains" value="B/D/F/H=141-166"/>
</dbReference>
<dbReference type="PDB" id="5WOS">
    <property type="method" value="X-ray"/>
    <property type="resolution" value="2.45 A"/>
    <property type="chains" value="B=141-166"/>
</dbReference>
<dbReference type="PDB" id="6QFI">
    <property type="method" value="X-ray"/>
    <property type="resolution" value="2.40 A"/>
    <property type="chains" value="B=141-166"/>
</dbReference>
<dbReference type="PDB" id="6RJP">
    <property type="method" value="X-ray"/>
    <property type="resolution" value="2.57 A"/>
    <property type="chains" value="C/D=147-163"/>
</dbReference>
<dbReference type="PDB" id="6TQQ">
    <property type="method" value="X-ray"/>
    <property type="resolution" value="3.00 A"/>
    <property type="chains" value="B=141-166"/>
</dbReference>
<dbReference type="PDB" id="6UA3">
    <property type="method" value="X-ray"/>
    <property type="resolution" value="1.55 A"/>
    <property type="chains" value="B=146-166"/>
</dbReference>
<dbReference type="PDB" id="6UAB">
    <property type="method" value="X-ray"/>
    <property type="resolution" value="2.10 A"/>
    <property type="chains" value="B=146-166"/>
</dbReference>
<dbReference type="PDB" id="6VBX">
    <property type="method" value="X-ray"/>
    <property type="resolution" value="1.95 A"/>
    <property type="chains" value="B=148-159"/>
</dbReference>
<dbReference type="PDB" id="6X8O">
    <property type="method" value="X-ray"/>
    <property type="resolution" value="1.31 A"/>
    <property type="chains" value="A/B/C/D=141-166"/>
</dbReference>
<dbReference type="PDB" id="8T5E">
    <property type="method" value="X-ray"/>
    <property type="resolution" value="3.00 A"/>
    <property type="chains" value="B=141-166"/>
</dbReference>
<dbReference type="PDBsum" id="1F95"/>
<dbReference type="PDBsum" id="2K7W"/>
<dbReference type="PDBsum" id="2NL9"/>
<dbReference type="PDBsum" id="2V6Q"/>
<dbReference type="PDBsum" id="2VM6"/>
<dbReference type="PDBsum" id="2WH6"/>
<dbReference type="PDBsum" id="2YQ6"/>
<dbReference type="PDBsum" id="2YQ7"/>
<dbReference type="PDBsum" id="3D7V"/>
<dbReference type="PDBsum" id="3FDL"/>
<dbReference type="PDBsum" id="3IO8"/>
<dbReference type="PDBsum" id="3IO9"/>
<dbReference type="PDBsum" id="3KJ0"/>
<dbReference type="PDBsum" id="3KJ1"/>
<dbReference type="PDBsum" id="3KJ2"/>
<dbReference type="PDBsum" id="4A1U"/>
<dbReference type="PDBsum" id="4A1W"/>
<dbReference type="PDBsum" id="4B4S"/>
<dbReference type="PDBsum" id="4D2M"/>
<dbReference type="PDBsum" id="4QVF"/>
<dbReference type="PDBsum" id="4UF3"/>
<dbReference type="PDBsum" id="4YJ4"/>
<dbReference type="PDBsum" id="4ZIE"/>
<dbReference type="PDBsum" id="4ZIF"/>
<dbReference type="PDBsum" id="4ZIH"/>
<dbReference type="PDBsum" id="5AGW"/>
<dbReference type="PDBsum" id="5AGX"/>
<dbReference type="PDBsum" id="5C3G"/>
<dbReference type="PDBsum" id="5VWV"/>
<dbReference type="PDBsum" id="5VWW"/>
<dbReference type="PDBsum" id="5VWX"/>
<dbReference type="PDBsum" id="5VWY"/>
<dbReference type="PDBsum" id="5VWZ"/>
<dbReference type="PDBsum" id="5VX0"/>
<dbReference type="PDBsum" id="5VX2"/>
<dbReference type="PDBsum" id="5VX3"/>
<dbReference type="PDBsum" id="5WOS"/>
<dbReference type="PDBsum" id="6QFI"/>
<dbReference type="PDBsum" id="6RJP"/>
<dbReference type="PDBsum" id="6TQQ"/>
<dbReference type="PDBsum" id="6UA3"/>
<dbReference type="PDBsum" id="6UAB"/>
<dbReference type="PDBsum" id="6VBX"/>
<dbReference type="PDBsum" id="6X8O"/>
<dbReference type="PDBsum" id="8T5E"/>
<dbReference type="SMR" id="O43521"/>
<dbReference type="BioGRID" id="115335">
    <property type="interactions" value="83"/>
</dbReference>
<dbReference type="ComplexPortal" id="CPX-1985">
    <property type="entry name" value="BIM:BCL-XL complex"/>
</dbReference>
<dbReference type="ComplexPortal" id="CPX-1990">
    <property type="entry name" value="BIM:BCL-2 complex"/>
</dbReference>
<dbReference type="ComplexPortal" id="CPX-481">
    <property type="entry name" value="MCL-1-BIM complex"/>
</dbReference>
<dbReference type="CORUM" id="O43521"/>
<dbReference type="DIP" id="DIP-29185N"/>
<dbReference type="ELM" id="O43521"/>
<dbReference type="FunCoup" id="O43521">
    <property type="interactions" value="1203"/>
</dbReference>
<dbReference type="IntAct" id="O43521">
    <property type="interactions" value="59"/>
</dbReference>
<dbReference type="MINT" id="O43521"/>
<dbReference type="STRING" id="9606.ENSP00000376943"/>
<dbReference type="BindingDB" id="O43521"/>
<dbReference type="ChEMBL" id="CHEMBL5777"/>
<dbReference type="TCDB" id="8.A.69.1.1">
    <property type="family name" value="the pro-apoptotic bcl-2-family protein bim (bim) family"/>
</dbReference>
<dbReference type="iPTMnet" id="O43521"/>
<dbReference type="PhosphoSitePlus" id="O43521"/>
<dbReference type="BioMuta" id="BCL2L11"/>
<dbReference type="jPOST" id="O43521"/>
<dbReference type="MassIVE" id="O43521"/>
<dbReference type="PaxDb" id="9606-ENSP00000376943"/>
<dbReference type="PeptideAtlas" id="O43521"/>
<dbReference type="ProteomicsDB" id="49009">
    <molecule id="O43521-1"/>
</dbReference>
<dbReference type="ProteomicsDB" id="49010">
    <molecule id="O43521-10"/>
</dbReference>
<dbReference type="ProteomicsDB" id="49011">
    <molecule id="O43521-11"/>
</dbReference>
<dbReference type="ProteomicsDB" id="49012">
    <molecule id="O43521-12"/>
</dbReference>
<dbReference type="ProteomicsDB" id="49013">
    <molecule id="O43521-13"/>
</dbReference>
<dbReference type="ProteomicsDB" id="49014">
    <molecule id="O43521-14"/>
</dbReference>
<dbReference type="ProteomicsDB" id="49015">
    <molecule id="O43521-15"/>
</dbReference>
<dbReference type="ProteomicsDB" id="49016">
    <molecule id="O43521-16"/>
</dbReference>
<dbReference type="ProteomicsDB" id="49017">
    <molecule id="O43521-17"/>
</dbReference>
<dbReference type="ProteomicsDB" id="49018">
    <molecule id="O43521-18"/>
</dbReference>
<dbReference type="ProteomicsDB" id="49019">
    <molecule id="O43521-19"/>
</dbReference>
<dbReference type="ProteomicsDB" id="49020">
    <molecule id="O43521-2"/>
</dbReference>
<dbReference type="ProteomicsDB" id="49021">
    <molecule id="O43521-20"/>
</dbReference>
<dbReference type="ProteomicsDB" id="49022">
    <molecule id="O43521-3"/>
</dbReference>
<dbReference type="ProteomicsDB" id="49023">
    <molecule id="O43521-4"/>
</dbReference>
<dbReference type="ProteomicsDB" id="49024">
    <molecule id="O43521-5"/>
</dbReference>
<dbReference type="ProteomicsDB" id="49025">
    <molecule id="O43521-6"/>
</dbReference>
<dbReference type="ProteomicsDB" id="49026">
    <molecule id="O43521-7"/>
</dbReference>
<dbReference type="ProteomicsDB" id="49027">
    <molecule id="O43521-8"/>
</dbReference>
<dbReference type="ProteomicsDB" id="49028">
    <molecule id="O43521-9"/>
</dbReference>
<dbReference type="Pumba" id="O43521"/>
<dbReference type="Antibodypedia" id="3621">
    <property type="antibodies" value="1230 antibodies from 45 providers"/>
</dbReference>
<dbReference type="DNASU" id="10018"/>
<dbReference type="Ensembl" id="ENST00000308659.12">
    <molecule id="O43521-2"/>
    <property type="protein sequence ID" value="ENSP00000309226.8"/>
    <property type="gene ID" value="ENSG00000153094.26"/>
</dbReference>
<dbReference type="Ensembl" id="ENST00000393256.8">
    <molecule id="O43521-1"/>
    <property type="protein sequence ID" value="ENSP00000376943.2"/>
    <property type="gene ID" value="ENSG00000153094.26"/>
</dbReference>
<dbReference type="Ensembl" id="ENST00000405953.6">
    <molecule id="O43521-17"/>
    <property type="protein sequence ID" value="ENSP00000384641.1"/>
    <property type="gene ID" value="ENSG00000153094.26"/>
</dbReference>
<dbReference type="Ensembl" id="ENST00000415458.5">
    <molecule id="O43521-16"/>
    <property type="protein sequence ID" value="ENSP00000393781.1"/>
    <property type="gene ID" value="ENSG00000153094.26"/>
</dbReference>
<dbReference type="Ensembl" id="ENST00000431217.1">
    <molecule id="O43521-10"/>
    <property type="protein sequence ID" value="ENSP00000394640.1"/>
    <property type="gene ID" value="ENSG00000153094.26"/>
</dbReference>
<dbReference type="Ensembl" id="ENST00000436733.5">
    <molecule id="O43521-14"/>
    <property type="protein sequence ID" value="ENSP00000403727.1"/>
    <property type="gene ID" value="ENSG00000153094.26"/>
</dbReference>
<dbReference type="Ensembl" id="ENST00000437029.5">
    <molecule id="O43521-8"/>
    <property type="protein sequence ID" value="ENSP00000412892.1"/>
    <property type="gene ID" value="ENSG00000153094.26"/>
</dbReference>
<dbReference type="Ensembl" id="ENST00000439718.1">
    <molecule id="O43521-7"/>
    <property type="protein sequence ID" value="ENSP00000411137.1"/>
    <property type="gene ID" value="ENSG00000153094.26"/>
</dbReference>
<dbReference type="Ensembl" id="ENST00000452231.5">
    <molecule id="O43521-9"/>
    <property type="protein sequence ID" value="ENSP00000391292.1"/>
    <property type="gene ID" value="ENSG00000153094.26"/>
</dbReference>
<dbReference type="Ensembl" id="ENST00000715206.1">
    <molecule id="O43521-1"/>
    <property type="protein sequence ID" value="ENSP00000520413.1"/>
    <property type="gene ID" value="ENSG00000153094.26"/>
</dbReference>
<dbReference type="GeneID" id="10018"/>
<dbReference type="KEGG" id="hsa:10018"/>
<dbReference type="MANE-Select" id="ENST00000393256.8">
    <property type="protein sequence ID" value="ENSP00000376943.2"/>
    <property type="RefSeq nucleotide sequence ID" value="NM_138621.5"/>
    <property type="RefSeq protein sequence ID" value="NP_619527.1"/>
</dbReference>
<dbReference type="UCSC" id="uc002tgt.2">
    <molecule id="O43521-1"/>
    <property type="organism name" value="human"/>
</dbReference>
<dbReference type="AGR" id="HGNC:994"/>
<dbReference type="CTD" id="10018"/>
<dbReference type="DisGeNET" id="10018"/>
<dbReference type="GeneCards" id="BCL2L11"/>
<dbReference type="HGNC" id="HGNC:994">
    <property type="gene designation" value="BCL2L11"/>
</dbReference>
<dbReference type="HPA" id="ENSG00000153094">
    <property type="expression patterns" value="Low tissue specificity"/>
</dbReference>
<dbReference type="MalaCards" id="BCL2L11"/>
<dbReference type="MIM" id="603827">
    <property type="type" value="gene"/>
</dbReference>
<dbReference type="neXtProt" id="NX_O43521"/>
<dbReference type="OpenTargets" id="ENSG00000153094"/>
<dbReference type="PharmGKB" id="PA25305"/>
<dbReference type="VEuPathDB" id="HostDB:ENSG00000153094"/>
<dbReference type="eggNOG" id="ENOG502S0DF">
    <property type="taxonomic scope" value="Eukaryota"/>
</dbReference>
<dbReference type="GeneTree" id="ENSGT00390000003178"/>
<dbReference type="HOGENOM" id="CLU_171932_0_0_1"/>
<dbReference type="InParanoid" id="O43521"/>
<dbReference type="OMA" id="LRPEMWI"/>
<dbReference type="OrthoDB" id="8441539at2759"/>
<dbReference type="PAN-GO" id="O43521">
    <property type="GO annotations" value="3 GO annotations based on evolutionary models"/>
</dbReference>
<dbReference type="PhylomeDB" id="O43521"/>
<dbReference type="TreeFam" id="TF335898"/>
<dbReference type="PathwayCommons" id="O43521"/>
<dbReference type="Reactome" id="R-HSA-111446">
    <property type="pathway name" value="Activation of BIM and translocation to mitochondria"/>
</dbReference>
<dbReference type="Reactome" id="R-HSA-111453">
    <property type="pathway name" value="BH3-only proteins associate with and inactivate anti-apoptotic BCL-2 members"/>
</dbReference>
<dbReference type="Reactome" id="R-HSA-193648">
    <property type="pathway name" value="NRAGE signals death through JNK"/>
</dbReference>
<dbReference type="Reactome" id="R-HSA-6802952">
    <property type="pathway name" value="Signaling by BRAF and RAF1 fusions"/>
</dbReference>
<dbReference type="Reactome" id="R-HSA-8862803">
    <property type="pathway name" value="Deregulated CDK5 triggers multiple neurodegenerative pathways in Alzheimer's disease models"/>
</dbReference>
<dbReference type="Reactome" id="R-HSA-8952158">
    <property type="pathway name" value="RUNX3 regulates BCL2L11 (BIM) transcription"/>
</dbReference>
<dbReference type="Reactome" id="R-HSA-9607240">
    <property type="pathway name" value="FLT3 Signaling"/>
</dbReference>
<dbReference type="Reactome" id="R-HSA-9614657">
    <property type="pathway name" value="FOXO-mediated transcription of cell death genes"/>
</dbReference>
<dbReference type="SignaLink" id="O43521"/>
<dbReference type="SIGNOR" id="O43521"/>
<dbReference type="BioGRID-ORCS" id="10018">
    <property type="hits" value="21 hits in 1172 CRISPR screens"/>
</dbReference>
<dbReference type="ChiTaRS" id="BCL2L11">
    <property type="organism name" value="human"/>
</dbReference>
<dbReference type="EvolutionaryTrace" id="O43521"/>
<dbReference type="GeneWiki" id="BCL2L11"/>
<dbReference type="GenomeRNAi" id="10018"/>
<dbReference type="Pharos" id="O43521">
    <property type="development level" value="Tchem"/>
</dbReference>
<dbReference type="PRO" id="PR:O43521"/>
<dbReference type="Proteomes" id="UP000005640">
    <property type="component" value="Chromosome 2"/>
</dbReference>
<dbReference type="RNAct" id="O43521">
    <property type="molecule type" value="protein"/>
</dbReference>
<dbReference type="Bgee" id="ENSG00000153094">
    <property type="expression patterns" value="Expressed in sperm and 168 other cell types or tissues"/>
</dbReference>
<dbReference type="ExpressionAtlas" id="O43521">
    <property type="expression patterns" value="baseline and differential"/>
</dbReference>
<dbReference type="GO" id="GO:0097136">
    <property type="term" value="C:Bcl-2 family protein complex"/>
    <property type="evidence" value="ECO:0000353"/>
    <property type="project" value="ComplexPortal"/>
</dbReference>
<dbReference type="GO" id="GO:0097141">
    <property type="term" value="C:BIM-BCL-2 complex"/>
    <property type="evidence" value="ECO:0000314"/>
    <property type="project" value="UniProtKB"/>
</dbReference>
<dbReference type="GO" id="GO:0097140">
    <property type="term" value="C:BIM-BCL-xl complex"/>
    <property type="evidence" value="ECO:0000314"/>
    <property type="project" value="UniProtKB"/>
</dbReference>
<dbReference type="GO" id="GO:0005829">
    <property type="term" value="C:cytosol"/>
    <property type="evidence" value="ECO:0000314"/>
    <property type="project" value="UniProtKB"/>
</dbReference>
<dbReference type="GO" id="GO:0012505">
    <property type="term" value="C:endomembrane system"/>
    <property type="evidence" value="ECO:0007669"/>
    <property type="project" value="UniProtKB-SubCell"/>
</dbReference>
<dbReference type="GO" id="GO:0005741">
    <property type="term" value="C:mitochondrial outer membrane"/>
    <property type="evidence" value="ECO:0000304"/>
    <property type="project" value="Reactome"/>
</dbReference>
<dbReference type="GO" id="GO:0005739">
    <property type="term" value="C:mitochondrion"/>
    <property type="evidence" value="ECO:0006056"/>
    <property type="project" value="FlyBase"/>
</dbReference>
<dbReference type="GO" id="GO:0008017">
    <property type="term" value="F:microtubule binding"/>
    <property type="evidence" value="ECO:0007669"/>
    <property type="project" value="Ensembl"/>
</dbReference>
<dbReference type="GO" id="GO:0019901">
    <property type="term" value="F:protein kinase binding"/>
    <property type="evidence" value="ECO:0007669"/>
    <property type="project" value="Ensembl"/>
</dbReference>
<dbReference type="GO" id="GO:0006915">
    <property type="term" value="P:apoptotic process"/>
    <property type="evidence" value="ECO:0000304"/>
    <property type="project" value="UniProtKB"/>
</dbReference>
<dbReference type="GO" id="GO:1902263">
    <property type="term" value="P:apoptotic process involved in embryonic digit morphogenesis"/>
    <property type="evidence" value="ECO:0007669"/>
    <property type="project" value="Ensembl"/>
</dbReference>
<dbReference type="GO" id="GO:0001782">
    <property type="term" value="P:B cell homeostasis"/>
    <property type="evidence" value="ECO:0007669"/>
    <property type="project" value="Ensembl"/>
</dbReference>
<dbReference type="GO" id="GO:0007160">
    <property type="term" value="P:cell-matrix adhesion"/>
    <property type="evidence" value="ECO:0007669"/>
    <property type="project" value="Ensembl"/>
</dbReference>
<dbReference type="GO" id="GO:0071385">
    <property type="term" value="P:cellular response to glucocorticoid stimulus"/>
    <property type="evidence" value="ECO:0000304"/>
    <property type="project" value="ARUK-UCL"/>
</dbReference>
<dbReference type="GO" id="GO:0048066">
    <property type="term" value="P:developmental pigmentation"/>
    <property type="evidence" value="ECO:0007669"/>
    <property type="project" value="Ensembl"/>
</dbReference>
<dbReference type="GO" id="GO:0043583">
    <property type="term" value="P:ear development"/>
    <property type="evidence" value="ECO:0007669"/>
    <property type="project" value="Ensembl"/>
</dbReference>
<dbReference type="GO" id="GO:0097192">
    <property type="term" value="P:extrinsic apoptotic signaling pathway in absence of ligand"/>
    <property type="evidence" value="ECO:0007669"/>
    <property type="project" value="Ensembl"/>
</dbReference>
<dbReference type="GO" id="GO:0001701">
    <property type="term" value="P:in utero embryonic development"/>
    <property type="evidence" value="ECO:0007669"/>
    <property type="project" value="Ensembl"/>
</dbReference>
<dbReference type="GO" id="GO:0008630">
    <property type="term" value="P:intrinsic apoptotic signaling pathway in response to DNA damage"/>
    <property type="evidence" value="ECO:0000314"/>
    <property type="project" value="MGI"/>
</dbReference>
<dbReference type="GO" id="GO:0001822">
    <property type="term" value="P:kidney development"/>
    <property type="evidence" value="ECO:0007669"/>
    <property type="project" value="Ensembl"/>
</dbReference>
<dbReference type="GO" id="GO:0008584">
    <property type="term" value="P:male gonad development"/>
    <property type="evidence" value="ECO:0007669"/>
    <property type="project" value="Ensembl"/>
</dbReference>
<dbReference type="GO" id="GO:0030879">
    <property type="term" value="P:mammary gland development"/>
    <property type="evidence" value="ECO:0007669"/>
    <property type="project" value="Ensembl"/>
</dbReference>
<dbReference type="GO" id="GO:0007127">
    <property type="term" value="P:meiosis I"/>
    <property type="evidence" value="ECO:0000318"/>
    <property type="project" value="GO_Central"/>
</dbReference>
<dbReference type="GO" id="GO:0002262">
    <property type="term" value="P:myeloid cell homeostasis"/>
    <property type="evidence" value="ECO:0007669"/>
    <property type="project" value="Ensembl"/>
</dbReference>
<dbReference type="GO" id="GO:0042475">
    <property type="term" value="P:odontogenesis of dentin-containing tooth"/>
    <property type="evidence" value="ECO:0007669"/>
    <property type="project" value="Ensembl"/>
</dbReference>
<dbReference type="GO" id="GO:0043065">
    <property type="term" value="P:positive regulation of apoptotic process"/>
    <property type="evidence" value="ECO:0000315"/>
    <property type="project" value="UniProtKB"/>
</dbReference>
<dbReference type="GO" id="GO:0045787">
    <property type="term" value="P:positive regulation of cell cycle"/>
    <property type="evidence" value="ECO:0007669"/>
    <property type="project" value="Ensembl"/>
</dbReference>
<dbReference type="GO" id="GO:1902237">
    <property type="term" value="P:positive regulation of endoplasmic reticulum stress-induced intrinsic apoptotic signaling pathway"/>
    <property type="evidence" value="ECO:0000304"/>
    <property type="project" value="ParkinsonsUK-UCL"/>
</dbReference>
<dbReference type="GO" id="GO:2000271">
    <property type="term" value="P:positive regulation of fibroblast apoptotic process"/>
    <property type="evidence" value="ECO:0000314"/>
    <property type="project" value="UniProtKB"/>
</dbReference>
<dbReference type="GO" id="GO:2001244">
    <property type="term" value="P:positive regulation of intrinsic apoptotic signaling pathway"/>
    <property type="evidence" value="ECO:0000315"/>
    <property type="project" value="UniProtKB"/>
</dbReference>
<dbReference type="GO" id="GO:1903896">
    <property type="term" value="P:positive regulation of IRE1-mediated unfolded protein response"/>
    <property type="evidence" value="ECO:0000304"/>
    <property type="project" value="ParkinsonsUK-UCL"/>
</dbReference>
<dbReference type="GO" id="GO:1902110">
    <property type="term" value="P:positive regulation of mitochondrial membrane permeability involved in apoptotic process"/>
    <property type="evidence" value="ECO:0007669"/>
    <property type="project" value="Ensembl"/>
</dbReference>
<dbReference type="GO" id="GO:0043525">
    <property type="term" value="P:positive regulation of neuron apoptotic process"/>
    <property type="evidence" value="ECO:0007669"/>
    <property type="project" value="Ensembl"/>
</dbReference>
<dbReference type="GO" id="GO:0031334">
    <property type="term" value="P:positive regulation of protein-containing complex assembly"/>
    <property type="evidence" value="ECO:0000314"/>
    <property type="project" value="BHF-UCL"/>
</dbReference>
<dbReference type="GO" id="GO:0090200">
    <property type="term" value="P:positive regulation of release of cytochrome c from mitochondria"/>
    <property type="evidence" value="ECO:0000315"/>
    <property type="project" value="UniProtKB"/>
</dbReference>
<dbReference type="GO" id="GO:0070234">
    <property type="term" value="P:positive regulation of T cell apoptotic process"/>
    <property type="evidence" value="ECO:0007669"/>
    <property type="project" value="Ensembl"/>
</dbReference>
<dbReference type="GO" id="GO:0009791">
    <property type="term" value="P:post-embryonic development"/>
    <property type="evidence" value="ECO:0007669"/>
    <property type="project" value="Ensembl"/>
</dbReference>
<dbReference type="GO" id="GO:0042981">
    <property type="term" value="P:regulation of apoptotic process"/>
    <property type="evidence" value="ECO:0000314"/>
    <property type="project" value="ComplexPortal"/>
</dbReference>
<dbReference type="GO" id="GO:0048070">
    <property type="term" value="P:regulation of developmental pigmentation"/>
    <property type="evidence" value="ECO:0007669"/>
    <property type="project" value="Ensembl"/>
</dbReference>
<dbReference type="GO" id="GO:0046620">
    <property type="term" value="P:regulation of organ growth"/>
    <property type="evidence" value="ECO:0007669"/>
    <property type="project" value="Ensembl"/>
</dbReference>
<dbReference type="GO" id="GO:0034976">
    <property type="term" value="P:response to endoplasmic reticulum stress"/>
    <property type="evidence" value="ECO:0000314"/>
    <property type="project" value="UniProtKB"/>
</dbReference>
<dbReference type="GO" id="GO:0007283">
    <property type="term" value="P:spermatogenesis"/>
    <property type="evidence" value="ECO:0007669"/>
    <property type="project" value="Ensembl"/>
</dbReference>
<dbReference type="GO" id="GO:0048536">
    <property type="term" value="P:spleen development"/>
    <property type="evidence" value="ECO:0007669"/>
    <property type="project" value="Ensembl"/>
</dbReference>
<dbReference type="GO" id="GO:0043029">
    <property type="term" value="P:T cell homeostasis"/>
    <property type="evidence" value="ECO:0007669"/>
    <property type="project" value="Ensembl"/>
</dbReference>
<dbReference type="GO" id="GO:0070242">
    <property type="term" value="P:thymocyte apoptotic process"/>
    <property type="evidence" value="ECO:0007669"/>
    <property type="project" value="Ensembl"/>
</dbReference>
<dbReference type="GO" id="GO:0048538">
    <property type="term" value="P:thymus development"/>
    <property type="evidence" value="ECO:0007669"/>
    <property type="project" value="Ensembl"/>
</dbReference>
<dbReference type="GO" id="GO:0035148">
    <property type="term" value="P:tube formation"/>
    <property type="evidence" value="ECO:0007669"/>
    <property type="project" value="Ensembl"/>
</dbReference>
<dbReference type="DisProt" id="DP02849"/>
<dbReference type="IDEAL" id="IID00746"/>
<dbReference type="InterPro" id="IPR014771">
    <property type="entry name" value="Apoptosis_Bim_N"/>
</dbReference>
<dbReference type="InterPro" id="IPR017288">
    <property type="entry name" value="Bcl-2-like_11"/>
</dbReference>
<dbReference type="InterPro" id="IPR015040">
    <property type="entry name" value="Bcl-x_interacting_BH3_dom"/>
</dbReference>
<dbReference type="InterPro" id="IPR052133">
    <property type="entry name" value="Immune_Signaling-Apoptosis_Reg"/>
</dbReference>
<dbReference type="PANTHER" id="PTHR12044:SF9">
    <property type="entry name" value="BCL-2-LIKE PROTEIN 11"/>
    <property type="match status" value="1"/>
</dbReference>
<dbReference type="PANTHER" id="PTHR12044">
    <property type="entry name" value="BCL2 INTERACTING MEDIATOR OF CELL DEATH"/>
    <property type="match status" value="1"/>
</dbReference>
<dbReference type="Pfam" id="PF08945">
    <property type="entry name" value="Bclx_interact"/>
    <property type="match status" value="1"/>
</dbReference>
<dbReference type="Pfam" id="PF06773">
    <property type="entry name" value="Bim_N"/>
    <property type="match status" value="1"/>
</dbReference>
<dbReference type="PIRSF" id="PIRSF037827">
    <property type="entry name" value="Bcl-2-like_p11"/>
    <property type="match status" value="1"/>
</dbReference>
<protein>
    <recommendedName>
        <fullName>Bcl-2-like protein 11</fullName>
        <shortName>Bcl2-L-11</shortName>
    </recommendedName>
    <alternativeName>
        <fullName>Bcl2-interacting mediator of cell death</fullName>
    </alternativeName>
</protein>
<evidence type="ECO:0000250" key="1"/>
<evidence type="ECO:0000250" key="2">
    <source>
        <dbReference type="UniProtKB" id="O54918"/>
    </source>
</evidence>
<evidence type="ECO:0000250" key="3">
    <source>
        <dbReference type="UniProtKB" id="O88498"/>
    </source>
</evidence>
<evidence type="ECO:0000256" key="4">
    <source>
        <dbReference type="SAM" id="MobiDB-lite"/>
    </source>
</evidence>
<evidence type="ECO:0000269" key="5">
    <source>
    </source>
</evidence>
<evidence type="ECO:0000269" key="6">
    <source>
    </source>
</evidence>
<evidence type="ECO:0000269" key="7">
    <source>
    </source>
</evidence>
<evidence type="ECO:0000269" key="8">
    <source>
    </source>
</evidence>
<evidence type="ECO:0000269" key="9">
    <source>
    </source>
</evidence>
<evidence type="ECO:0000269" key="10">
    <source>
    </source>
</evidence>
<evidence type="ECO:0000269" key="11">
    <source>
    </source>
</evidence>
<evidence type="ECO:0000269" key="12">
    <source>
    </source>
</evidence>
<evidence type="ECO:0000269" key="13">
    <source>
    </source>
</evidence>
<evidence type="ECO:0000269" key="14">
    <source>
    </source>
</evidence>
<evidence type="ECO:0000269" key="15">
    <source>
    </source>
</evidence>
<evidence type="ECO:0000269" key="16">
    <source>
    </source>
</evidence>
<evidence type="ECO:0000269" key="17">
    <source>
    </source>
</evidence>
<evidence type="ECO:0000269" key="18">
    <source>
    </source>
</evidence>
<evidence type="ECO:0000269" key="19">
    <source>
    </source>
</evidence>
<evidence type="ECO:0000303" key="20">
    <source>
    </source>
</evidence>
<evidence type="ECO:0000303" key="21">
    <source>
    </source>
</evidence>
<evidence type="ECO:0000303" key="22">
    <source>
    </source>
</evidence>
<evidence type="ECO:0000303" key="23">
    <source>
    </source>
</evidence>
<evidence type="ECO:0000303" key="24">
    <source>
    </source>
</evidence>
<evidence type="ECO:0000303" key="25">
    <source>
    </source>
</evidence>
<evidence type="ECO:0000303" key="26">
    <source>
    </source>
</evidence>
<evidence type="ECO:0000305" key="27"/>
<evidence type="ECO:0007744" key="28">
    <source>
        <dbReference type="PDB" id="4B4S"/>
    </source>
</evidence>
<evidence type="ECO:0007744" key="29">
    <source>
    </source>
</evidence>
<evidence type="ECO:0007829" key="30">
    <source>
        <dbReference type="PDB" id="1F95"/>
    </source>
</evidence>
<evidence type="ECO:0007829" key="31">
    <source>
        <dbReference type="PDB" id="6X8O"/>
    </source>
</evidence>
<proteinExistence type="evidence at protein level"/>
<accession>O43521</accession>
<accession>A8K2W2</accession>
<accession>O43522</accession>
<accession>Q0MSE7</accession>
<accession>Q0MSE8</accession>
<accession>Q0MSE9</accession>
<accession>Q53R28</accession>
<accession>Q6JTU6</accession>
<accession>Q6T851</accession>
<accession>Q6TE14</accession>
<accession>Q6TE15</accession>
<accession>Q6TE16</accession>
<accession>Q6V402</accession>
<accession>Q8WYL6</accession>
<accession>Q8WYL7</accession>
<accession>Q8WYL8</accession>
<accession>Q8WYL9</accession>
<accession>Q8WYM0</accession>
<accession>Q8WYM1</accession>
<name>B2L11_HUMAN</name>
<sequence>MAKQPSDVSSECDREGRQLQPAERPPQLRPGAPTSLQTEPQGNPEGNHGGEGDSCPHGSPQGPLAPPASPGPFATRSPLFIFMRRSSLLSRSSSGYFSFDTDRSPAPMSCDKSTQTPSPPCQAFNHYLSAMASMRQAEPADMRPEIWIAQELRRIGDEFNAYYARRVFLNNYQAAEDHPRMVILRLLRYIVRLVWRMH</sequence>
<gene>
    <name type="primary">BCL2L11</name>
    <name type="synonym">BIM</name>
</gene>
<feature type="chain" id="PRO_0000143109" description="Bcl-2-like protein 11">
    <location>
        <begin position="1"/>
        <end position="198"/>
    </location>
</feature>
<feature type="region of interest" description="Disordered" evidence="4">
    <location>
        <begin position="1"/>
        <end position="72"/>
    </location>
</feature>
<feature type="short sequence motif" description="BH3">
    <location>
        <begin position="148"/>
        <end position="162"/>
    </location>
</feature>
<feature type="modified residue" description="Phosphoserine; by MAPK" evidence="7">
    <location>
        <position position="69"/>
    </location>
</feature>
<feature type="modified residue" description="Phosphoserine" evidence="3">
    <location>
        <position position="77"/>
    </location>
</feature>
<feature type="modified residue" description="Phosphoserine" evidence="3">
    <location>
        <position position="87"/>
    </location>
</feature>
<feature type="modified residue" description="Phosphoserine" evidence="29">
    <location>
        <position position="94"/>
    </location>
</feature>
<feature type="splice variant" id="VSP_042865" description="In isoform BimA." evidence="21">
    <location>
        <begin position="42"/>
        <end position="166"/>
    </location>
</feature>
<feature type="splice variant" id="VSP_035608" description="In isoform BimS, isoform Bim-alpha3, isoform Bim-alpha6 and isoform Bim-alpha4." evidence="21 24 25">
    <location>
        <begin position="42"/>
        <end position="131"/>
    </location>
</feature>
<feature type="splice variant" id="VSP_000535" description="In isoform BimABC, isoform BimL, isoform Bim-alpha2, isoform Bim-gamma, isoform Bim-beta6 and isoform Bim-beta7." evidence="20 21 22 23 25 26">
    <location>
        <begin position="42"/>
        <end position="101"/>
    </location>
</feature>
<feature type="splice variant" id="VSP_035609" description="In isoform Bim-beta3." evidence="20">
    <original>GNPEGNHGGEGDSCPHGSPQGPLAPPASPGPFAT</original>
    <variation>VSLCHPGWSALVRSWLTATSNSQVQAVLLPQPPK</variation>
    <location>
        <begin position="42"/>
        <end position="75"/>
    </location>
</feature>
<feature type="splice variant" id="VSP_035610" description="In isoform Bim-beta4." evidence="20">
    <original>NP</original>
    <variation>IF</variation>
    <location>
        <begin position="43"/>
        <end position="44"/>
    </location>
</feature>
<feature type="splice variant" id="VSP_035611" description="In isoform Bim-beta4." evidence="20">
    <location>
        <begin position="45"/>
        <end position="198"/>
    </location>
</feature>
<feature type="splice variant" id="VSP_035612" description="In isoform Bim-gamma." evidence="22">
    <original>ASMRQAEPADMRPEIWIAQELRRIGDEFNAYYARRVFLNNYQAAEDHPRMVILRLLRYIVRLVWRMH</original>
    <variation>VVILEDIGDLSLCFGFIFTGLDLYGHHHSQDTEQLNHKDFS</variation>
    <location>
        <begin position="132"/>
        <end position="198"/>
    </location>
</feature>
<feature type="splice variant" id="VSP_042866" description="In isoform BimAC and isoform BimABC." evidence="21">
    <location>
        <begin position="132"/>
        <end position="166"/>
    </location>
</feature>
<feature type="splice variant" id="VSP_035613" description="In isoform Bim-beta5 and isoform Bim-beta7." evidence="25">
    <original>ASMRQAEPA</original>
    <variation>VREIEEVVV</variation>
    <location>
        <begin position="132"/>
        <end position="140"/>
    </location>
</feature>
<feature type="splice variant" id="VSP_035614" description="In isoform Bim-beta2 and isoform Bim-beta6." evidence="20 25">
    <original>ASMR</original>
    <variation>GIFE</variation>
    <location>
        <begin position="132"/>
        <end position="135"/>
    </location>
</feature>
<feature type="splice variant" id="VSP_035615" description="In isoform Bim-beta1." evidence="20">
    <original>SMR</original>
    <variation>NWD</variation>
    <location>
        <begin position="133"/>
        <end position="135"/>
    </location>
</feature>
<feature type="splice variant" id="VSP_035616" description="In isoform Bim-beta1, isoform Bim-beta2 and isoform Bim-beta6." evidence="20 25">
    <location>
        <begin position="136"/>
        <end position="198"/>
    </location>
</feature>
<feature type="splice variant" id="VSP_035617" description="In isoform Bim-beta5 and isoform Bim-beta7." evidence="25">
    <location>
        <begin position="141"/>
        <end position="198"/>
    </location>
</feature>
<feature type="splice variant" id="VSP_035620" description="In isoform Bim-alpha1, isoform Bim-alpha2 and isoform Bim-alpha3." evidence="20 21 24 25">
    <original>VFLNNYQAAEDHPRMVILRLLRYIVRLVWRMH</original>
    <variation>LEK</variation>
    <location>
        <begin position="167"/>
        <end position="198"/>
    </location>
</feature>
<feature type="splice variant" id="VSP_035618" description="In isoform Bim-alpha4." evidence="25">
    <original>VFLNNYQAAEDHPRMVILRLLRYIVRLVWRMH</original>
    <variation>LAKLLASST</variation>
    <location>
        <begin position="167"/>
        <end position="198"/>
    </location>
</feature>
<feature type="splice variant" id="VSP_035619" description="In isoform Bim-alpha5 and isoform Bim-alpha6." evidence="25">
    <original>VFLNNYQAAEDHPRMVILRLLRYIVRLVWRMH</original>
    <variation>MPLPPD</variation>
    <location>
        <begin position="167"/>
        <end position="198"/>
    </location>
</feature>
<feature type="mutagenesis site" description="Retains the ability to induce apoptosis. Abolishes interaction with BAX; in isoform Bim-alpha3 and isoform BimS. No effect on interaction with BCL2." evidence="5 10">
    <original>G</original>
    <variation>A</variation>
    <location>
        <position position="156"/>
    </location>
</feature>
<feature type="mutagenesis site" description="Abolishes induction of apoptosis. Abolishes interaction with BAX and BCL2; in isoform Bim-alpha3 and isoform BimS. Loses the ability to induce the conformationally active form of BAX." evidence="5 10">
    <original>G</original>
    <variation>E</variation>
    <location>
        <position position="156"/>
    </location>
</feature>
<feature type="mutagenesis site" description="Retains the ability to induce apoptosis. Abolishes interaction with BCL2; in isoform Bim-alpha3 and isoform BimS. No effect on interaction with BAX." evidence="5">
    <original>N</original>
    <variation>A</variation>
    <location>
        <position position="160"/>
    </location>
</feature>
<feature type="sequence conflict" description="In Ref. 7; BAF83066." evidence="27" ref="7">
    <original>P</original>
    <variation>L</variation>
    <location>
        <position position="33"/>
    </location>
</feature>
<feature type="strand" evidence="30">
    <location>
        <begin position="112"/>
        <end position="115"/>
    </location>
</feature>
<feature type="helix" evidence="31">
    <location>
        <begin position="144"/>
        <end position="165"/>
    </location>
</feature>